<gene>
    <name type="primary">pol</name>
</gene>
<organism>
    <name type="scientific">Dengue virus type 3 (strain Sri Lanka/1266/2000)</name>
    <name type="common">DENV-3</name>
    <dbReference type="NCBI Taxonomy" id="408692"/>
    <lineage>
        <taxon>Viruses</taxon>
        <taxon>Riboviria</taxon>
        <taxon>Orthornavirae</taxon>
        <taxon>Kitrinoviricota</taxon>
        <taxon>Flasuviricetes</taxon>
        <taxon>Amarillovirales</taxon>
        <taxon>Flaviviridae</taxon>
        <taxon>Orthoflavivirus</taxon>
        <taxon>Orthoflavivirus denguei</taxon>
        <taxon>Dengue virus</taxon>
    </lineage>
</organism>
<accession>Q6YMS4</accession>
<accession>Q6DLV0</accession>
<proteinExistence type="evidence at protein level"/>
<dbReference type="EC" id="3.4.21.91"/>
<dbReference type="EC" id="3.6.1.15" evidence="9"/>
<dbReference type="EC" id="3.6.4.13" evidence="9"/>
<dbReference type="EC" id="2.1.1.56" evidence="17 20"/>
<dbReference type="EC" id="2.1.1.57" evidence="17 20"/>
<dbReference type="EC" id="2.7.7.48" evidence="12 19"/>
<dbReference type="EMBL" id="AY099336">
    <property type="protein sequence ID" value="AAM51537.1"/>
    <property type="molecule type" value="Genomic_RNA"/>
</dbReference>
<dbReference type="EMBL" id="AY662691">
    <property type="protein sequence ID" value="AAT75224.1"/>
    <property type="molecule type" value="Genomic_RNA"/>
</dbReference>
<dbReference type="PDB" id="2J7U">
    <property type="method" value="X-ray"/>
    <property type="resolution" value="1.85 A"/>
    <property type="chains" value="A=2762-3390"/>
</dbReference>
<dbReference type="PDB" id="2J7W">
    <property type="method" value="X-ray"/>
    <property type="resolution" value="2.60 A"/>
    <property type="chains" value="A=2763-3390"/>
</dbReference>
<dbReference type="PDB" id="3VWS">
    <property type="method" value="X-ray"/>
    <property type="resolution" value="2.10 A"/>
    <property type="chains" value="A=2762-3390"/>
</dbReference>
<dbReference type="PDB" id="4C11">
    <property type="method" value="X-ray"/>
    <property type="resolution" value="2.60 A"/>
    <property type="chains" value="A/B=2753-3390"/>
</dbReference>
<dbReference type="PDB" id="4HHJ">
    <property type="method" value="X-ray"/>
    <property type="resolution" value="1.79 A"/>
    <property type="chains" value="A=2762-3390"/>
</dbReference>
<dbReference type="PDB" id="5DTO">
    <property type="method" value="X-ray"/>
    <property type="resolution" value="2.60 A"/>
    <property type="chains" value="A=2496-3385"/>
</dbReference>
<dbReference type="PDB" id="5EIW">
    <property type="method" value="X-ray"/>
    <property type="resolution" value="1.61 A"/>
    <property type="chains" value="A/C=2491-2766"/>
</dbReference>
<dbReference type="PDB" id="5F3T">
    <property type="method" value="X-ray"/>
    <property type="resolution" value="2.05 A"/>
    <property type="chains" value="A=2762-3390"/>
</dbReference>
<dbReference type="PDB" id="5F3Z">
    <property type="method" value="X-ray"/>
    <property type="resolution" value="2.00 A"/>
    <property type="chains" value="A=2762-3390"/>
</dbReference>
<dbReference type="PDB" id="5F41">
    <property type="method" value="X-ray"/>
    <property type="resolution" value="2.00 A"/>
    <property type="chains" value="A=2762-3390"/>
</dbReference>
<dbReference type="PDB" id="5HMW">
    <property type="method" value="X-ray"/>
    <property type="resolution" value="2.15 A"/>
    <property type="chains" value="A=2762-3390"/>
</dbReference>
<dbReference type="PDB" id="5HMX">
    <property type="method" value="X-ray"/>
    <property type="resolution" value="2.40 A"/>
    <property type="chains" value="A=2762-3390"/>
</dbReference>
<dbReference type="PDB" id="5HMY">
    <property type="method" value="X-ray"/>
    <property type="resolution" value="2.10 A"/>
    <property type="chains" value="A=2762-3390"/>
</dbReference>
<dbReference type="PDB" id="5HMZ">
    <property type="method" value="X-ray"/>
    <property type="resolution" value="1.99 A"/>
    <property type="chains" value="A=2762-3390"/>
</dbReference>
<dbReference type="PDB" id="5HN0">
    <property type="method" value="X-ray"/>
    <property type="resolution" value="2.05 A"/>
    <property type="chains" value="A=2762-3390"/>
</dbReference>
<dbReference type="PDB" id="5I3P">
    <property type="method" value="X-ray"/>
    <property type="resolution" value="2.45 A"/>
    <property type="chains" value="A=2762-3390"/>
</dbReference>
<dbReference type="PDB" id="5I3Q">
    <property type="method" value="X-ray"/>
    <property type="resolution" value="1.88 A"/>
    <property type="chains" value="A=2762-3390"/>
</dbReference>
<dbReference type="PDB" id="5IQ6">
    <property type="method" value="X-ray"/>
    <property type="resolution" value="3.00 A"/>
    <property type="chains" value="A=2763-3390"/>
</dbReference>
<dbReference type="PDB" id="5JJR">
    <property type="method" value="X-ray"/>
    <property type="resolution" value="1.99 A"/>
    <property type="chains" value="A=2494-3385"/>
</dbReference>
<dbReference type="PDB" id="5JJS">
    <property type="method" value="X-ray"/>
    <property type="resolution" value="1.65 A"/>
    <property type="chains" value="A=2494-3385"/>
</dbReference>
<dbReference type="PDB" id="5WJN">
    <property type="method" value="X-ray"/>
    <property type="resolution" value="2.85 A"/>
    <property type="chains" value="C/F/I=1606-1615"/>
</dbReference>
<dbReference type="PDB" id="5WKH">
    <property type="method" value="X-ray"/>
    <property type="resolution" value="3.20 A"/>
    <property type="chains" value="C/H=1606-1615"/>
</dbReference>
<dbReference type="PDB" id="6H80">
    <property type="method" value="X-ray"/>
    <property type="resolution" value="2.30 A"/>
    <property type="chains" value="A=2762-3390"/>
</dbReference>
<dbReference type="PDB" id="6H9R">
    <property type="method" value="X-ray"/>
    <property type="resolution" value="2.40 A"/>
    <property type="chains" value="A=2762-3390"/>
</dbReference>
<dbReference type="PDB" id="6XD0">
    <property type="method" value="X-ray"/>
    <property type="resolution" value="2.01 A"/>
    <property type="chains" value="A=2762-3390"/>
</dbReference>
<dbReference type="PDB" id="6XD1">
    <property type="method" value="X-ray"/>
    <property type="resolution" value="1.95 A"/>
    <property type="chains" value="A=2762-3390"/>
</dbReference>
<dbReference type="PDBsum" id="2J7U"/>
<dbReference type="PDBsum" id="2J7W"/>
<dbReference type="PDBsum" id="3VWS"/>
<dbReference type="PDBsum" id="4C11"/>
<dbReference type="PDBsum" id="4HHJ"/>
<dbReference type="PDBsum" id="5DTO"/>
<dbReference type="PDBsum" id="5EIW"/>
<dbReference type="PDBsum" id="5F3T"/>
<dbReference type="PDBsum" id="5F3Z"/>
<dbReference type="PDBsum" id="5F41"/>
<dbReference type="PDBsum" id="5HMW"/>
<dbReference type="PDBsum" id="5HMX"/>
<dbReference type="PDBsum" id="5HMY"/>
<dbReference type="PDBsum" id="5HMZ"/>
<dbReference type="PDBsum" id="5HN0"/>
<dbReference type="PDBsum" id="5I3P"/>
<dbReference type="PDBsum" id="5I3Q"/>
<dbReference type="PDBsum" id="5IQ6"/>
<dbReference type="PDBsum" id="5JJR"/>
<dbReference type="PDBsum" id="5JJS"/>
<dbReference type="PDBsum" id="5WJN"/>
<dbReference type="PDBsum" id="5WKH"/>
<dbReference type="PDBsum" id="6H80"/>
<dbReference type="PDBsum" id="6H9R"/>
<dbReference type="PDBsum" id="6XD0"/>
<dbReference type="PDBsum" id="6XD1"/>
<dbReference type="SMR" id="Q6YMS4"/>
<dbReference type="BindingDB" id="Q6YMS4"/>
<dbReference type="MEROPS" id="S07.001"/>
<dbReference type="GlyCosmos" id="Q6YMS4">
    <property type="glycosylation" value="10 sites, No reported glycans"/>
</dbReference>
<dbReference type="ABCD" id="Q6YMS4">
    <property type="antibodies" value="1 sequenced antibody"/>
</dbReference>
<dbReference type="KEGG" id="vg:5075727"/>
<dbReference type="BRENDA" id="2.7.7.48">
    <property type="organism ID" value="1867"/>
</dbReference>
<dbReference type="BRENDA" id="3.4.21.91">
    <property type="organism ID" value="9648"/>
</dbReference>
<dbReference type="EvolutionaryTrace" id="Q6YMS4"/>
<dbReference type="PRO" id="PR:Q6YMS4"/>
<dbReference type="Proteomes" id="UP000007537">
    <property type="component" value="Segment"/>
</dbReference>
<dbReference type="Proteomes" id="UP000096981">
    <property type="component" value="Genome"/>
</dbReference>
<dbReference type="GO" id="GO:0005576">
    <property type="term" value="C:extracellular region"/>
    <property type="evidence" value="ECO:0007669"/>
    <property type="project" value="UniProtKB-SubCell"/>
</dbReference>
<dbReference type="GO" id="GO:0044167">
    <property type="term" value="C:host cell endoplasmic reticulum membrane"/>
    <property type="evidence" value="ECO:0007669"/>
    <property type="project" value="UniProtKB-SubCell"/>
</dbReference>
<dbReference type="GO" id="GO:0033650">
    <property type="term" value="C:host cell mitochondrion"/>
    <property type="evidence" value="ECO:0007669"/>
    <property type="project" value="UniProtKB-SubCell"/>
</dbReference>
<dbReference type="GO" id="GO:0042025">
    <property type="term" value="C:host cell nucleus"/>
    <property type="evidence" value="ECO:0007669"/>
    <property type="project" value="UniProtKB-SubCell"/>
</dbReference>
<dbReference type="GO" id="GO:0044220">
    <property type="term" value="C:host cell perinuclear region of cytoplasm"/>
    <property type="evidence" value="ECO:0007669"/>
    <property type="project" value="UniProtKB-SubCell"/>
</dbReference>
<dbReference type="GO" id="GO:0016020">
    <property type="term" value="C:membrane"/>
    <property type="evidence" value="ECO:0007669"/>
    <property type="project" value="UniProtKB-KW"/>
</dbReference>
<dbReference type="GO" id="GO:0019028">
    <property type="term" value="C:viral capsid"/>
    <property type="evidence" value="ECO:0007669"/>
    <property type="project" value="UniProtKB-KW"/>
</dbReference>
<dbReference type="GO" id="GO:0019031">
    <property type="term" value="C:viral envelope"/>
    <property type="evidence" value="ECO:0007669"/>
    <property type="project" value="UniProtKB-KW"/>
</dbReference>
<dbReference type="GO" id="GO:0055036">
    <property type="term" value="C:virion membrane"/>
    <property type="evidence" value="ECO:0007669"/>
    <property type="project" value="UniProtKB-SubCell"/>
</dbReference>
<dbReference type="GO" id="GO:0005524">
    <property type="term" value="F:ATP binding"/>
    <property type="evidence" value="ECO:0007669"/>
    <property type="project" value="UniProtKB-KW"/>
</dbReference>
<dbReference type="GO" id="GO:0016887">
    <property type="term" value="F:ATP hydrolysis activity"/>
    <property type="evidence" value="ECO:0007669"/>
    <property type="project" value="RHEA"/>
</dbReference>
<dbReference type="GO" id="GO:0015267">
    <property type="term" value="F:channel activity"/>
    <property type="evidence" value="ECO:0007669"/>
    <property type="project" value="UniProtKB-KW"/>
</dbReference>
<dbReference type="GO" id="GO:0003725">
    <property type="term" value="F:double-stranded RNA binding"/>
    <property type="evidence" value="ECO:0007669"/>
    <property type="project" value="InterPro"/>
</dbReference>
<dbReference type="GO" id="GO:0046872">
    <property type="term" value="F:metal ion binding"/>
    <property type="evidence" value="ECO:0007669"/>
    <property type="project" value="UniProtKB-KW"/>
</dbReference>
<dbReference type="GO" id="GO:0004483">
    <property type="term" value="F:mRNA (nucleoside-2'-O-)-methyltransferase activity"/>
    <property type="evidence" value="ECO:0007669"/>
    <property type="project" value="UniProtKB-EC"/>
</dbReference>
<dbReference type="GO" id="GO:0004482">
    <property type="term" value="F:mRNA 5'-cap (guanine-N7-)-methyltransferase activity"/>
    <property type="evidence" value="ECO:0007669"/>
    <property type="project" value="UniProtKB-EC"/>
</dbReference>
<dbReference type="GO" id="GO:0046983">
    <property type="term" value="F:protein dimerization activity"/>
    <property type="evidence" value="ECO:0007669"/>
    <property type="project" value="InterPro"/>
</dbReference>
<dbReference type="GO" id="GO:0003724">
    <property type="term" value="F:RNA helicase activity"/>
    <property type="evidence" value="ECO:0007669"/>
    <property type="project" value="UniProtKB-EC"/>
</dbReference>
<dbReference type="GO" id="GO:0003968">
    <property type="term" value="F:RNA-directed RNA polymerase activity"/>
    <property type="evidence" value="ECO:0007669"/>
    <property type="project" value="UniProtKB-KW"/>
</dbReference>
<dbReference type="GO" id="GO:0004252">
    <property type="term" value="F:serine-type endopeptidase activity"/>
    <property type="evidence" value="ECO:0007669"/>
    <property type="project" value="InterPro"/>
</dbReference>
<dbReference type="GO" id="GO:0005198">
    <property type="term" value="F:structural molecule activity"/>
    <property type="evidence" value="ECO:0007669"/>
    <property type="project" value="InterPro"/>
</dbReference>
<dbReference type="GO" id="GO:0075512">
    <property type="term" value="P:clathrin-dependent endocytosis of virus by host cell"/>
    <property type="evidence" value="ECO:0007669"/>
    <property type="project" value="UniProtKB-KW"/>
</dbReference>
<dbReference type="GO" id="GO:0039654">
    <property type="term" value="P:fusion of virus membrane with host endosome membrane"/>
    <property type="evidence" value="ECO:0007669"/>
    <property type="project" value="UniProtKB-KW"/>
</dbReference>
<dbReference type="GO" id="GO:0034220">
    <property type="term" value="P:monoatomic ion transmembrane transport"/>
    <property type="evidence" value="ECO:0007669"/>
    <property type="project" value="UniProtKB-KW"/>
</dbReference>
<dbReference type="GO" id="GO:0006508">
    <property type="term" value="P:proteolysis"/>
    <property type="evidence" value="ECO:0007669"/>
    <property type="project" value="UniProtKB-KW"/>
</dbReference>
<dbReference type="GO" id="GO:0039520">
    <property type="term" value="P:symbiont-mediated activation of host autophagy"/>
    <property type="evidence" value="ECO:0007669"/>
    <property type="project" value="UniProtKB-KW"/>
</dbReference>
<dbReference type="GO" id="GO:0039545">
    <property type="term" value="P:symbiont-mediated suppression of host cytoplasmic pattern recognition receptor signaling pathway via inhibition of MAVS activity"/>
    <property type="evidence" value="ECO:0007669"/>
    <property type="project" value="UniProtKB-KW"/>
</dbReference>
<dbReference type="GO" id="GO:0039574">
    <property type="term" value="P:symbiont-mediated suppression of host JAK-STAT cascade via inhibition of host TYK2 activity"/>
    <property type="evidence" value="ECO:0007669"/>
    <property type="project" value="UniProtKB-KW"/>
</dbReference>
<dbReference type="GO" id="GO:0039564">
    <property type="term" value="P:symbiont-mediated suppression of host JAK-STAT cascade via inhibition of STAT2 activity"/>
    <property type="evidence" value="ECO:0007669"/>
    <property type="project" value="UniProtKB-KW"/>
</dbReference>
<dbReference type="GO" id="GO:0039502">
    <property type="term" value="P:symbiont-mediated suppression of host type I interferon-mediated signaling pathway"/>
    <property type="evidence" value="ECO:0007669"/>
    <property type="project" value="UniProtKB-KW"/>
</dbReference>
<dbReference type="GO" id="GO:0039694">
    <property type="term" value="P:viral RNA genome replication"/>
    <property type="evidence" value="ECO:0007669"/>
    <property type="project" value="InterPro"/>
</dbReference>
<dbReference type="GO" id="GO:0019062">
    <property type="term" value="P:virion attachment to host cell"/>
    <property type="evidence" value="ECO:0007669"/>
    <property type="project" value="UniProtKB-KW"/>
</dbReference>
<dbReference type="CDD" id="cd20761">
    <property type="entry name" value="capping_2-OMTase_Flaviviridae"/>
    <property type="match status" value="1"/>
</dbReference>
<dbReference type="CDD" id="cd17931">
    <property type="entry name" value="DEXHc_viral_Ns3"/>
    <property type="match status" value="1"/>
</dbReference>
<dbReference type="CDD" id="cd12149">
    <property type="entry name" value="Flavi_E_C"/>
    <property type="match status" value="1"/>
</dbReference>
<dbReference type="CDD" id="cd17038">
    <property type="entry name" value="Flavi_M"/>
    <property type="match status" value="1"/>
</dbReference>
<dbReference type="CDD" id="cd23204">
    <property type="entry name" value="Flavivirus_RdRp"/>
    <property type="match status" value="1"/>
</dbReference>
<dbReference type="CDD" id="cd18806">
    <property type="entry name" value="SF2_C_viral"/>
    <property type="match status" value="1"/>
</dbReference>
<dbReference type="FunFam" id="1.20.1280.260:FF:000001">
    <property type="entry name" value="Envelope glycoprotein"/>
    <property type="match status" value="1"/>
</dbReference>
<dbReference type="FunFam" id="2.60.40.350:FF:000001">
    <property type="entry name" value="Envelope glycoprotein"/>
    <property type="match status" value="1"/>
</dbReference>
<dbReference type="FunFam" id="1.10.10.930:FF:000001">
    <property type="entry name" value="Genome polyprotein"/>
    <property type="match status" value="1"/>
</dbReference>
<dbReference type="FunFam" id="2.60.260.50:FF:000001">
    <property type="entry name" value="Genome polyprotein"/>
    <property type="match status" value="1"/>
</dbReference>
<dbReference type="FunFam" id="3.30.70.2840:FF:000001">
    <property type="entry name" value="Genome polyprotein"/>
    <property type="match status" value="1"/>
</dbReference>
<dbReference type="FunFam" id="3.30.70.2840:FF:000002">
    <property type="entry name" value="Genome polyprotein"/>
    <property type="match status" value="1"/>
</dbReference>
<dbReference type="FunFam" id="3.40.50.150:FF:000105">
    <property type="entry name" value="Genome polyprotein"/>
    <property type="match status" value="1"/>
</dbReference>
<dbReference type="FunFam" id="3.40.50.300:FF:000763">
    <property type="entry name" value="Genome polyprotein"/>
    <property type="match status" value="1"/>
</dbReference>
<dbReference type="Gene3D" id="1.10.10.930">
    <property type="match status" value="1"/>
</dbReference>
<dbReference type="Gene3D" id="1.10.260.90">
    <property type="match status" value="1"/>
</dbReference>
<dbReference type="Gene3D" id="1.20.1280.260">
    <property type="match status" value="1"/>
</dbReference>
<dbReference type="Gene3D" id="2.40.10.120">
    <property type="match status" value="2"/>
</dbReference>
<dbReference type="Gene3D" id="2.60.40.350">
    <property type="match status" value="1"/>
</dbReference>
<dbReference type="Gene3D" id="1.10.8.970">
    <property type="entry name" value="Flavivirus envelope glycoprotein M-like"/>
    <property type="match status" value="1"/>
</dbReference>
<dbReference type="Gene3D" id="2.60.260.50">
    <property type="entry name" value="Flavivirus polyprotein propeptide domain"/>
    <property type="match status" value="1"/>
</dbReference>
<dbReference type="Gene3D" id="3.30.70.2840">
    <property type="entry name" value="Flavivirus RNA-directed RNA polymerase, thumb domain"/>
    <property type="match status" value="3"/>
</dbReference>
<dbReference type="Gene3D" id="3.40.50.300">
    <property type="entry name" value="P-loop containing nucleotide triphosphate hydrolases"/>
    <property type="match status" value="2"/>
</dbReference>
<dbReference type="Gene3D" id="2.60.98.10">
    <property type="entry name" value="Tick-borne Encephalitis virus Glycoprotein, domain 1"/>
    <property type="match status" value="1"/>
</dbReference>
<dbReference type="Gene3D" id="2.40.10.10">
    <property type="entry name" value="Trypsin-like serine proteases"/>
    <property type="match status" value="1"/>
</dbReference>
<dbReference type="Gene3D" id="3.40.50.150">
    <property type="entry name" value="Vaccinia Virus protein VP39"/>
    <property type="match status" value="1"/>
</dbReference>
<dbReference type="Gene3D" id="3.30.67.10">
    <property type="entry name" value="Viral Envelope Glycoprotein, domain 2"/>
    <property type="match status" value="1"/>
</dbReference>
<dbReference type="Gene3D" id="3.30.387.10">
    <property type="entry name" value="Viral Envelope Glycoprotein, domain 3"/>
    <property type="match status" value="1"/>
</dbReference>
<dbReference type="InterPro" id="IPR043502">
    <property type="entry name" value="DNA/RNA_pol_sf"/>
</dbReference>
<dbReference type="InterPro" id="IPR000069">
    <property type="entry name" value="Env_glycoprot_M_flavivir"/>
</dbReference>
<dbReference type="InterPro" id="IPR038302">
    <property type="entry name" value="Env_glycoprot_M_sf_flavivir"/>
</dbReference>
<dbReference type="InterPro" id="IPR013755">
    <property type="entry name" value="Flav_gly_cen_dom_subdom1"/>
</dbReference>
<dbReference type="InterPro" id="IPR001122">
    <property type="entry name" value="Flavi_capsidC"/>
</dbReference>
<dbReference type="InterPro" id="IPR037172">
    <property type="entry name" value="Flavi_capsidC_sf"/>
</dbReference>
<dbReference type="InterPro" id="IPR011492">
    <property type="entry name" value="Flavi_DEAD"/>
</dbReference>
<dbReference type="InterPro" id="IPR027287">
    <property type="entry name" value="Flavi_E_Ig-like"/>
</dbReference>
<dbReference type="InterPro" id="IPR026470">
    <property type="entry name" value="Flavi_E_Stem/Anchor_dom"/>
</dbReference>
<dbReference type="InterPro" id="IPR038345">
    <property type="entry name" value="Flavi_E_Stem/Anchor_dom_sf"/>
</dbReference>
<dbReference type="InterPro" id="IPR011998">
    <property type="entry name" value="Flavi_Glycoprot_E_cen/dimer"/>
</dbReference>
<dbReference type="InterPro" id="IPR001157">
    <property type="entry name" value="Flavi_NS1"/>
</dbReference>
<dbReference type="InterPro" id="IPR000752">
    <property type="entry name" value="Flavi_NS2A"/>
</dbReference>
<dbReference type="InterPro" id="IPR000487">
    <property type="entry name" value="Flavi_NS2B"/>
</dbReference>
<dbReference type="InterPro" id="IPR001850">
    <property type="entry name" value="Flavi_NS3_S7"/>
</dbReference>
<dbReference type="InterPro" id="IPR000404">
    <property type="entry name" value="Flavi_NS4A"/>
</dbReference>
<dbReference type="InterPro" id="IPR001528">
    <property type="entry name" value="Flavi_NS4B"/>
</dbReference>
<dbReference type="InterPro" id="IPR046811">
    <property type="entry name" value="Flavi_NS5_thumb"/>
</dbReference>
<dbReference type="InterPro" id="IPR002535">
    <property type="entry name" value="Flavi_propep"/>
</dbReference>
<dbReference type="InterPro" id="IPR038688">
    <property type="entry name" value="Flavi_propep_sf"/>
</dbReference>
<dbReference type="InterPro" id="IPR047530">
    <property type="entry name" value="Flavi_RdRp"/>
</dbReference>
<dbReference type="InterPro" id="IPR000208">
    <property type="entry name" value="Flavi_RdRp_fingers/palm"/>
</dbReference>
<dbReference type="InterPro" id="IPR000336">
    <property type="entry name" value="Flavivir/Alphavir_Ig-like_sf"/>
</dbReference>
<dbReference type="InterPro" id="IPR014412">
    <property type="entry name" value="Gen_Poly_FLV"/>
</dbReference>
<dbReference type="InterPro" id="IPR036253">
    <property type="entry name" value="Glycoprot_cen/dimer_sf"/>
</dbReference>
<dbReference type="InterPro" id="IPR038055">
    <property type="entry name" value="Glycoprot_E_dimer_dom"/>
</dbReference>
<dbReference type="InterPro" id="IPR013756">
    <property type="entry name" value="GlyE_cen_dom_subdom2"/>
</dbReference>
<dbReference type="InterPro" id="IPR014001">
    <property type="entry name" value="Helicase_ATP-bd"/>
</dbReference>
<dbReference type="InterPro" id="IPR001650">
    <property type="entry name" value="Helicase_C-like"/>
</dbReference>
<dbReference type="InterPro" id="IPR014756">
    <property type="entry name" value="Ig_E-set"/>
</dbReference>
<dbReference type="InterPro" id="IPR026490">
    <property type="entry name" value="mRNA_cap_0/1_MeTrfase"/>
</dbReference>
<dbReference type="InterPro" id="IPR049486">
    <property type="entry name" value="NS3-hel_C_flaviviridae"/>
</dbReference>
<dbReference type="InterPro" id="IPR027417">
    <property type="entry name" value="P-loop_NTPase"/>
</dbReference>
<dbReference type="InterPro" id="IPR009003">
    <property type="entry name" value="Peptidase_S1_PA"/>
</dbReference>
<dbReference type="InterPro" id="IPR043504">
    <property type="entry name" value="Peptidase_S1_PA_chymotrypsin"/>
</dbReference>
<dbReference type="InterPro" id="IPR007094">
    <property type="entry name" value="RNA-dir_pol_PSvirus"/>
</dbReference>
<dbReference type="InterPro" id="IPR002877">
    <property type="entry name" value="RNA_MeTrfase_FtsJ_dom"/>
</dbReference>
<dbReference type="InterPro" id="IPR029063">
    <property type="entry name" value="SAM-dependent_MTases_sf"/>
</dbReference>
<dbReference type="NCBIfam" id="TIGR04240">
    <property type="entry name" value="flavi_E_stem"/>
    <property type="match status" value="1"/>
</dbReference>
<dbReference type="Pfam" id="PF20907">
    <property type="entry name" value="Flav_NS3-hel_C"/>
    <property type="match status" value="1"/>
</dbReference>
<dbReference type="Pfam" id="PF01003">
    <property type="entry name" value="Flavi_capsid"/>
    <property type="match status" value="1"/>
</dbReference>
<dbReference type="Pfam" id="PF07652">
    <property type="entry name" value="Flavi_DEAD"/>
    <property type="match status" value="1"/>
</dbReference>
<dbReference type="Pfam" id="PF21659">
    <property type="entry name" value="Flavi_E_stem"/>
    <property type="match status" value="1"/>
</dbReference>
<dbReference type="Pfam" id="PF02832">
    <property type="entry name" value="Flavi_glycop_C"/>
    <property type="match status" value="1"/>
</dbReference>
<dbReference type="Pfam" id="PF00869">
    <property type="entry name" value="Flavi_glycoprot"/>
    <property type="match status" value="1"/>
</dbReference>
<dbReference type="Pfam" id="PF01004">
    <property type="entry name" value="Flavi_M"/>
    <property type="match status" value="1"/>
</dbReference>
<dbReference type="Pfam" id="PF00948">
    <property type="entry name" value="Flavi_NS1"/>
    <property type="match status" value="1"/>
</dbReference>
<dbReference type="Pfam" id="PF01005">
    <property type="entry name" value="Flavi_NS2A"/>
    <property type="match status" value="1"/>
</dbReference>
<dbReference type="Pfam" id="PF01002">
    <property type="entry name" value="Flavi_NS2B"/>
    <property type="match status" value="1"/>
</dbReference>
<dbReference type="Pfam" id="PF01350">
    <property type="entry name" value="Flavi_NS4A"/>
    <property type="match status" value="1"/>
</dbReference>
<dbReference type="Pfam" id="PF01349">
    <property type="entry name" value="Flavi_NS4B"/>
    <property type="match status" value="1"/>
</dbReference>
<dbReference type="Pfam" id="PF00972">
    <property type="entry name" value="Flavi_NS5"/>
    <property type="match status" value="1"/>
</dbReference>
<dbReference type="Pfam" id="PF20483">
    <property type="entry name" value="Flavi_NS5_thumb"/>
    <property type="match status" value="1"/>
</dbReference>
<dbReference type="Pfam" id="PF01570">
    <property type="entry name" value="Flavi_propep"/>
    <property type="match status" value="1"/>
</dbReference>
<dbReference type="Pfam" id="PF01728">
    <property type="entry name" value="FtsJ"/>
    <property type="match status" value="1"/>
</dbReference>
<dbReference type="Pfam" id="PF00949">
    <property type="entry name" value="Peptidase_S7"/>
    <property type="match status" value="1"/>
</dbReference>
<dbReference type="PIRSF" id="PIRSF003817">
    <property type="entry name" value="Gen_Poly_FLV"/>
    <property type="match status" value="1"/>
</dbReference>
<dbReference type="SMART" id="SM00487">
    <property type="entry name" value="DEXDc"/>
    <property type="match status" value="1"/>
</dbReference>
<dbReference type="SMART" id="SM00490">
    <property type="entry name" value="HELICc"/>
    <property type="match status" value="1"/>
</dbReference>
<dbReference type="SUPFAM" id="SSF56672">
    <property type="entry name" value="DNA/RNA polymerases"/>
    <property type="match status" value="1"/>
</dbReference>
<dbReference type="SUPFAM" id="SSF81296">
    <property type="entry name" value="E set domains"/>
    <property type="match status" value="1"/>
</dbReference>
<dbReference type="SUPFAM" id="SSF101257">
    <property type="entry name" value="Flavivirus capsid protein C"/>
    <property type="match status" value="1"/>
</dbReference>
<dbReference type="SUPFAM" id="SSF52540">
    <property type="entry name" value="P-loop containing nucleoside triphosphate hydrolases"/>
    <property type="match status" value="2"/>
</dbReference>
<dbReference type="SUPFAM" id="SSF53335">
    <property type="entry name" value="S-adenosyl-L-methionine-dependent methyltransferases"/>
    <property type="match status" value="1"/>
</dbReference>
<dbReference type="SUPFAM" id="SSF50494">
    <property type="entry name" value="Trypsin-like serine proteases"/>
    <property type="match status" value="1"/>
</dbReference>
<dbReference type="SUPFAM" id="SSF56983">
    <property type="entry name" value="Viral glycoprotein, central and dimerisation domains"/>
    <property type="match status" value="1"/>
</dbReference>
<dbReference type="PROSITE" id="PS51527">
    <property type="entry name" value="FLAVIVIRUS_NS2B"/>
    <property type="match status" value="1"/>
</dbReference>
<dbReference type="PROSITE" id="PS51528">
    <property type="entry name" value="FLAVIVIRUS_NS3PRO"/>
    <property type="match status" value="1"/>
</dbReference>
<dbReference type="PROSITE" id="PS51192">
    <property type="entry name" value="HELICASE_ATP_BIND_1"/>
    <property type="match status" value="1"/>
</dbReference>
<dbReference type="PROSITE" id="PS51194">
    <property type="entry name" value="HELICASE_CTER"/>
    <property type="match status" value="1"/>
</dbReference>
<dbReference type="PROSITE" id="PS50507">
    <property type="entry name" value="RDRP_SSRNA_POS"/>
    <property type="match status" value="1"/>
</dbReference>
<dbReference type="PROSITE" id="PS51591">
    <property type="entry name" value="RNA_CAP01_NS5_MT"/>
    <property type="match status" value="1"/>
</dbReference>
<protein>
    <recommendedName>
        <fullName>Genome polyprotein</fullName>
    </recommendedName>
    <component>
        <recommendedName>
            <fullName>Capsid protein C</fullName>
        </recommendedName>
        <alternativeName>
            <fullName>Core protein</fullName>
        </alternativeName>
    </component>
    <component>
        <recommendedName>
            <fullName>Protein prM</fullName>
        </recommendedName>
    </component>
    <component>
        <recommendedName>
            <fullName>Peptide pr</fullName>
        </recommendedName>
    </component>
    <component>
        <recommendedName>
            <fullName>Small envelope protein M</fullName>
        </recommendedName>
        <alternativeName>
            <fullName>Matrix protein</fullName>
        </alternativeName>
    </component>
    <component>
        <recommendedName>
            <fullName>Envelope protein E</fullName>
        </recommendedName>
    </component>
    <component>
        <recommendedName>
            <fullName>Non-structural protein 1</fullName>
            <shortName>NS1</shortName>
        </recommendedName>
    </component>
    <component>
        <recommendedName>
            <fullName>Non-structural protein 2A</fullName>
            <shortName>NS2A</shortName>
        </recommendedName>
    </component>
    <component>
        <recommendedName>
            <fullName>Serine protease subunit NS2B</fullName>
        </recommendedName>
        <alternativeName>
            <fullName>Flavivirin protease NS2B regulatory subunit</fullName>
        </alternativeName>
        <alternativeName>
            <fullName>Non-structural protein 2B</fullName>
        </alternativeName>
    </component>
    <component>
        <recommendedName>
            <fullName>Serine protease NS3</fullName>
            <ecNumber>3.4.21.91</ecNumber>
            <ecNumber evidence="9">3.6.1.15</ecNumber>
            <ecNumber evidence="9">3.6.4.13</ecNumber>
        </recommendedName>
        <alternativeName>
            <fullName>Flavivirin protease NS3 catalytic subunit</fullName>
        </alternativeName>
        <alternativeName>
            <fullName>Non-structural protein 3</fullName>
        </alternativeName>
    </component>
    <component>
        <recommendedName>
            <fullName>Non-structural protein 4A</fullName>
            <shortName>NS4A</shortName>
        </recommendedName>
    </component>
    <component>
        <recommendedName>
            <fullName>Peptide 2k</fullName>
        </recommendedName>
    </component>
    <component>
        <recommendedName>
            <fullName>Non-structural protein 4B</fullName>
            <shortName>NS4B</shortName>
        </recommendedName>
    </component>
    <component>
        <recommendedName>
            <fullName>RNA-directed RNA polymerase NS5</fullName>
            <ecNumber evidence="17 20">2.1.1.56</ecNumber>
            <ecNumber evidence="17 20">2.1.1.57</ecNumber>
            <ecNumber evidence="12 19">2.7.7.48</ecNumber>
        </recommendedName>
        <alternativeName>
            <fullName>Non-structural protein 5</fullName>
        </alternativeName>
    </component>
</protein>
<sequence length="3390" mass="377923">MNNQRKKTGKPSINMLKRVRNRVSTGSQLAKRFSKGLLNGQGPMKLVMAFIAFLRFLAIPPTAGVLARWGTFKKSGAIKVLKGFKKEISNMLSIINQRKKTSLCLMMILPAALAFHLTSRDGEPRMIVGKNERGKSLLFKTASGINMCTLIAMDLGEMCDDTVTYKCPHITEVEPEDIDCWCNLTSTWVTYGTCNQAGEHRRDKRSVALAPHVGMGLDTRTQTWMSAEGAWRQVEKVETWALRHPGFTILALFLAHYIGTSLTQKVVIFILLMLVTPSMTMRCVGVGNRDFVEGLSGATWVDVVLEHGGCVTTMAKNKPTLDIELQKTEATQLATLRKLCIEGKITNITTDSRCPTQGEAVLPEEQDQNYVCKHTYVDRGWGNGCGLFGKGSLVTCAKFQCLEPIEGKVVQYENLKYTVIITVHTGDQHQVGNETQGVTAEITPQASTTEAILPEYGTLGLECSPRTGLDFNEMILLTMKNKAWMVHRQWFFDLPLPWASGATTETPTWNRKELLVTFKNAHAKKQEVVVLGSQEGAMHTALTGATEIQNSGGTSIFAGHLKCRLKMDKLELKGMSYAMCTNTFVLKKEVSETQHGTILIKVEYKGEDAPCKIPFSTEDGQGKAHNGRLITANPVVTKKEEPVNIEAEPPFGESNIVIGIGDNALKINWYKKGSSIGKMFEATERGARRMAILGDTAWDFGSVGGVLNSLGKMVHQIFGSAYTALFSGVSWVMKIGIGVLLTWIGLNSKNTSMSFSCIAIGIITLYLGAVVQADMGCVINWKGKELKCGSGIFVTNEVHTWTEQYKFQADSPKRLATAIAGAWENGVCGIRSTTRMENLLWKQIANELNYILWENNIKLTVVVGDTLGVLEQGKRTLTPQPMELKYSWKTWGKAKIVTAETQNSSFIIDGPNTPECPSASRAWNVWEVEDYGFGVFTTNIWLKLREVYTQLCDHRLMSAAVKDERAVHADMGYWIESQKNGSWKLEKASLIEVKTCTWPKSHTLWTNGVLESDMIIPKSLAGPISQHNYRPGYHTQTAGPWHLGKLELDFNYCEGTTVVITESCGTRGPSLRTTTVSGKLIHEWCCRSCTLPPLRYMGEDGCWYGMEIRPISEKEENMVKSLVSAGSGKVDNFTMGVLCLAILFEEVLRGKFGKKHMIAGVFFTFVLLLSGQITWRDMAHTLIMIGSNASDRMGMGVTYLALIATFKIQPFLALGFFLRKLTSRENLLLGVGLAMATTLQLPEDIEQMANGVALGLMALKLITQFETYQLWTALVSLTCSNTIFTLTVAWRTATLILAGVSLLPVCQSSSMRKTDWLPMTVAAMGVPPLPLFIFSLKDTLKRRSWPLNEGVMAVGLVSILASSLLRNDVPMAGPLVAGGLLIACYVITGTSADLTVEKAPDVTWEEEAEQTGVSHNLMITVDDDGTMRIKDDETENILTVLLKTALLIVSGIFPYSIPATLLVWHTWQKQTQRSGVLWDVPSPPETQKAELEEGVYRIKQQGIFGKTQVGVGVQKEGVFHTMWHVTRGAVLTHNGKRLEPNWASVKKDLISYGGGWRLSAQWQKGEEVQVIAVEPGKNPKNFQTTPGTFQTTTGEIGAIALDFKPGTSGSPIINREGKVVGLYGNGVVTKNGGYVSGIAQTNAEPDGPTPELEEEMFKKRNLTIMDLHPGSGKTRKYLPAIVREAIKRRLRTLILAPTRVVAAEMEEALKGLPIRYQTTATKSEHTGREIVDLMCHATFTMRLLSPVRVPNYNLIIMDEAHFTDPASIAARGYISTRVGMGEAAAIFMTATPPGTADAFPQSNAPIQDEERDIPERSWNSGNEWITDFAGKTVWFVPSIKAGNDIANCLRKNGKKVIQLSRKTFDTEYQKTKLNDWDFVVTTDISEMGANFKADRVIDPRRCLKPVILTDGPERVILAGPMPVTAASAAQRRGRVGRNPQKENDQYIFTGQPLNNDEDHAHWTEAKMLLDNINTPEGIIPALFEPEREKSAAIDGEYRLKGESRKTFVELMRRGDLPVWLAHKVASEGIKYTDRKWCFDGQRNNQILEENMDVEIWTKEGEKKKLRPRWLDARTYSDPLALKEFKDFAAGRKSIALDLVTEIGRVPSHLAHRTRNALDNLVMLHTSEDGGRAYRHAVEELPETMETLLLLGLMILLTGGAMLFLISGKGIGKTSIGLICVIASSGMLWMAEVPLQWIASAIVLEFFMMVLLIPEPEKQRTPQDNQLAYVVIGILTLAATIAANEMGLLETTKRDLGMSKEPGVVSPTSYLDVDLHPASAWTLYAVATTVITPMLRHTIENSTANVSLAAIANQAVVLMGLDKGWPISKMDLGVPLLALGCYSQVNPLTLTAAVLLLITHYAIIGPGLQAKATREAQKRTAAGIMKNPTVDGIMTIDLDSVIFDSKFEKQLGQVMLLVLCAVQLLLMRTSWALCEALTLATGPITTLWEGSPGKFWNTTIAVSMANIFRGSYLAGAGLAFSIMKSVGTGKRGTGSQGETLGEKWKKKLNQLSRKEFDLYKKSGITEVDRTEAKEGLKRGETTHHAVSRGSAKLQWFVERNMVVPEGRVIDLGCGRGGWSYYCAGLKKVTEVRGYTKGGPGHEEPVPMSTYGWNIVKLMSGKDVFYLPPEKCDTLLCDIGESSPSPTVEESRTIRVLKMVEPWLKNNQFCIKVLNPYMPTVIEHLERLQRKHGGMLVRNPLSRNSTHEMYWISNGTGNIVSSVNMVSRLLLNRFTMTHRRPTIEKDVDLGAGTRHVNAEPETPNMDVIGERIKRIKEEHNSTWHYDDENPYKTWAYHGSYEVKATGSASSMINGVVKLLTKPWDVVPMVTQMAMTDTTPFGQQRVFKEKVDTRTPRPMPGTRKAMEITAEWLWRTLGRNKRPRLCTREEFTKKVRTNAAMGAVFTEENQWDSAKAAVEDEEFWKLVDRERELHKLGKCGSCVYNMMGKREKKLGEFGKAKGSRAIWYMWLGARYLEFEALGFLNEDHWFSRENSYSGVEGEGLHKLGYILRDISKIPGGAMYADDTAGWDTRITEDDLHNEEKIIQQMDPEHRQLANAIFKLTYQNKVVKVQRPTPTGTVMDIISRKDQRGSGQLGTYGLNTFTNMEAQLVRQMEGEGVLTKADLENPHLLEKKITQWLETKGVERLKRMAISGDDCVVKPIDDRFANALLALNDMGKVRKDIPQWQPSKGWHDWQQVPFCSHHFHELIMKDGRKLVVPCRPQDELIGRARISQGAGWSLRETACLGKAYAQMWSLMYFHRRDLRLASNAICSAVPVHWVPTSRTTWSIHAHHQWMTTEDMLTVWNRVWIEENPWMEDKTPVTTWENVPYLGKREDQWCGSLIGLTSRATWAQNIPTAIQQVRSLIGNEEFLDYMPSMKRFRKEEESEGAIW</sequence>
<organismHost>
    <name type="scientific">Aedimorphus</name>
    <dbReference type="NCBI Taxonomy" id="53540"/>
</organismHost>
<organismHost>
    <name type="scientific">Diceromyia</name>
    <dbReference type="NCBI Taxonomy" id="53539"/>
</organismHost>
<organismHost>
    <name type="scientific">Erythrocebus patas</name>
    <name type="common">Red guenon</name>
    <name type="synonym">Cercopithecus patas</name>
    <dbReference type="NCBI Taxonomy" id="9538"/>
</organismHost>
<organismHost>
    <name type="scientific">Homo sapiens</name>
    <name type="common">Human</name>
    <dbReference type="NCBI Taxonomy" id="9606"/>
</organismHost>
<organismHost>
    <name type="scientific">Stegomyia</name>
    <dbReference type="NCBI Taxonomy" id="53541"/>
</organismHost>
<feature type="chain" id="PRO_0000405225" description="Genome polyprotein">
    <location>
        <begin position="1"/>
        <end position="3390"/>
    </location>
</feature>
<feature type="chain" id="PRO_0000268088" description="Capsid protein C" evidence="6">
    <location>
        <begin position="1"/>
        <end position="100"/>
    </location>
</feature>
<feature type="propeptide" id="PRO_0000268089" description="ER anchor for the capsid protein C, removed in mature form by serine protease NS3" evidence="6">
    <location>
        <begin position="101"/>
        <end position="114"/>
    </location>
</feature>
<feature type="chain" id="PRO_0000268090" description="Protein prM" evidence="6">
    <location>
        <begin position="115"/>
        <end position="280"/>
    </location>
</feature>
<feature type="chain" id="PRO_0000268091" description="Peptide pr" evidence="6">
    <location>
        <begin position="115"/>
        <end position="205"/>
    </location>
</feature>
<feature type="chain" id="PRO_0000268092" description="Small envelope protein M" evidence="6">
    <location>
        <begin position="206"/>
        <end position="280"/>
    </location>
</feature>
<feature type="chain" id="PRO_0000268093" description="Envelope protein E" evidence="6">
    <location>
        <begin position="281"/>
        <end position="773"/>
    </location>
</feature>
<feature type="chain" id="PRO_0000268094" description="Non-structural protein 1" evidence="6">
    <location>
        <begin position="774"/>
        <end position="1125"/>
    </location>
</feature>
<feature type="chain" id="PRO_0000268095" description="Non-structural protein 2A" evidence="6">
    <location>
        <begin position="1126"/>
        <end position="1343"/>
    </location>
</feature>
<feature type="chain" id="PRO_0000268097" description="Serine protease subunit NS2B" evidence="6">
    <location>
        <begin position="1344"/>
        <end position="1473"/>
    </location>
</feature>
<feature type="chain" id="PRO_0000268098" description="Serine protease NS3" evidence="6">
    <location>
        <begin position="1474"/>
        <end position="2092"/>
    </location>
</feature>
<feature type="chain" id="PRO_0000268099" description="Non-structural protein 4A" evidence="6">
    <location>
        <begin position="2093"/>
        <end position="2219"/>
    </location>
</feature>
<feature type="peptide" id="PRO_0000268100" description="Peptide 2k" evidence="6">
    <location>
        <begin position="2220"/>
        <end position="2242"/>
    </location>
</feature>
<feature type="chain" id="PRO_0000268101" description="Non-structural protein 4B" evidence="6">
    <location>
        <begin position="2243"/>
        <end position="2490"/>
    </location>
</feature>
<feature type="chain" id="PRO_0000268102" description="RNA-directed RNA polymerase NS5" evidence="6">
    <location>
        <begin position="2491"/>
        <end position="3390"/>
    </location>
</feature>
<feature type="topological domain" description="Cytoplasmic" evidence="10">
    <location>
        <begin position="1"/>
        <end position="100"/>
    </location>
</feature>
<feature type="transmembrane region" description="Helical" evidence="10">
    <location>
        <begin position="101"/>
        <end position="120"/>
    </location>
</feature>
<feature type="topological domain" description="Extracellular" evidence="10">
    <location>
        <begin position="121"/>
        <end position="243"/>
    </location>
</feature>
<feature type="transmembrane region" description="Helical" evidence="10">
    <location>
        <begin position="244"/>
        <end position="264"/>
    </location>
</feature>
<feature type="topological domain" description="Cytoplasmic" evidence="10">
    <location>
        <position position="265"/>
    </location>
</feature>
<feature type="transmembrane region" description="Helical" evidence="10">
    <location>
        <begin position="266"/>
        <end position="280"/>
    </location>
</feature>
<feature type="topological domain" description="Extracellular" evidence="10">
    <location>
        <begin position="281"/>
        <end position="723"/>
    </location>
</feature>
<feature type="transmembrane region" description="Helical" evidence="10">
    <location>
        <begin position="724"/>
        <end position="744"/>
    </location>
</feature>
<feature type="topological domain" description="Cytoplasmic" evidence="10">
    <location>
        <begin position="745"/>
        <end position="750"/>
    </location>
</feature>
<feature type="transmembrane region" description="Helical" evidence="10">
    <location>
        <begin position="751"/>
        <end position="771"/>
    </location>
</feature>
<feature type="topological domain" description="Extracellular" evidence="10">
    <location>
        <begin position="772"/>
        <end position="1193"/>
    </location>
</feature>
<feature type="transmembrane region" description="Helical" evidence="10">
    <location>
        <begin position="1194"/>
        <end position="1218"/>
    </location>
</feature>
<feature type="topological domain" description="Cytoplasmic" evidence="10">
    <location>
        <begin position="1219"/>
        <end position="1224"/>
    </location>
</feature>
<feature type="transmembrane region" description="Helical" evidence="10">
    <location>
        <begin position="1225"/>
        <end position="1243"/>
    </location>
</feature>
<feature type="topological domain" description="Lumenal" evidence="10">
    <location>
        <begin position="1244"/>
        <end position="1267"/>
    </location>
</feature>
<feature type="transmembrane region" description="Helical" evidence="10">
    <location>
        <begin position="1268"/>
        <end position="1288"/>
    </location>
</feature>
<feature type="topological domain" description="Cytoplasmic" evidence="10">
    <location>
        <position position="1289"/>
    </location>
</feature>
<feature type="transmembrane region" description="Helical" evidence="10">
    <location>
        <begin position="1290"/>
        <end position="1308"/>
    </location>
</feature>
<feature type="topological domain" description="Lumenal" evidence="10">
    <location>
        <begin position="1309"/>
        <end position="1315"/>
    </location>
</feature>
<feature type="transmembrane region" description="Helical" evidence="10">
    <location>
        <begin position="1316"/>
        <end position="1336"/>
    </location>
</feature>
<feature type="topological domain" description="Cytoplasmic" evidence="10">
    <location>
        <begin position="1337"/>
        <end position="1344"/>
    </location>
</feature>
<feature type="transmembrane region" description="Helical" evidence="10">
    <location>
        <begin position="1345"/>
        <end position="1365"/>
    </location>
</feature>
<feature type="topological domain" description="Lumenal" evidence="10">
    <location>
        <begin position="1366"/>
        <end position="1368"/>
    </location>
</feature>
<feature type="transmembrane region" description="Helical" evidence="10">
    <location>
        <begin position="1369"/>
        <end position="1389"/>
    </location>
</feature>
<feature type="topological domain" description="Cytoplasmic" evidence="10">
    <location>
        <begin position="1390"/>
        <end position="1443"/>
    </location>
</feature>
<feature type="intramembrane region" description="Helical" evidence="10">
    <location>
        <begin position="1444"/>
        <end position="1464"/>
    </location>
</feature>
<feature type="topological domain" description="Cytoplasmic" evidence="10">
    <location>
        <begin position="1465"/>
        <end position="2146"/>
    </location>
</feature>
<feature type="transmembrane region" description="Helical" evidence="10">
    <location>
        <begin position="2147"/>
        <end position="2167"/>
    </location>
</feature>
<feature type="topological domain" description="Lumenal" evidence="10">
    <location>
        <begin position="2168"/>
        <end position="2169"/>
    </location>
</feature>
<feature type="intramembrane region" description="Helical" evidence="10">
    <location>
        <begin position="2170"/>
        <end position="2190"/>
    </location>
</feature>
<feature type="topological domain" description="Lumenal" evidence="10">
    <location>
        <position position="2191"/>
    </location>
</feature>
<feature type="transmembrane region" description="Helical" evidence="10">
    <location>
        <begin position="2192"/>
        <end position="2212"/>
    </location>
</feature>
<feature type="topological domain" description="Cytoplasmic" evidence="10">
    <location>
        <begin position="2213"/>
        <end position="2227"/>
    </location>
</feature>
<feature type="transmembrane region" description="Helical; Note=Signal for NS4B" evidence="10">
    <location>
        <begin position="2228"/>
        <end position="2248"/>
    </location>
</feature>
<feature type="topological domain" description="Lumenal" evidence="10">
    <location>
        <begin position="2249"/>
        <end position="2273"/>
    </location>
</feature>
<feature type="intramembrane region" description="Helical" evidence="10">
    <location>
        <begin position="2274"/>
        <end position="2294"/>
    </location>
</feature>
<feature type="topological domain" description="Lumenal" evidence="10">
    <location>
        <begin position="2295"/>
        <end position="2305"/>
    </location>
</feature>
<feature type="intramembrane region" description="Helical" evidence="10">
    <location>
        <begin position="2306"/>
        <end position="2326"/>
    </location>
</feature>
<feature type="topological domain" description="Lumenal" evidence="10">
    <location>
        <begin position="2327"/>
        <end position="2346"/>
    </location>
</feature>
<feature type="transmembrane region" description="Helical" evidence="10">
    <location>
        <begin position="2347"/>
        <end position="2367"/>
    </location>
</feature>
<feature type="topological domain" description="Cytoplasmic" evidence="10">
    <location>
        <begin position="2368"/>
        <end position="2412"/>
    </location>
</feature>
<feature type="transmembrane region" description="Helical" evidence="10">
    <location>
        <begin position="2413"/>
        <end position="2433"/>
    </location>
</feature>
<feature type="topological domain" description="Lumenal" evidence="10">
    <location>
        <begin position="2434"/>
        <end position="2458"/>
    </location>
</feature>
<feature type="transmembrane region" description="Helical" evidence="10">
    <location>
        <begin position="2459"/>
        <end position="2479"/>
    </location>
</feature>
<feature type="topological domain" description="Cytoplasmic" evidence="10">
    <location>
        <begin position="2480"/>
        <end position="3390"/>
    </location>
</feature>
<feature type="domain" description="Peptidase S7" evidence="16">
    <location>
        <begin position="1474"/>
        <end position="1651"/>
    </location>
</feature>
<feature type="domain" description="Helicase ATP-binding" evidence="13">
    <location>
        <begin position="1654"/>
        <end position="1810"/>
    </location>
</feature>
<feature type="domain" description="Helicase C-terminal" evidence="14">
    <location>
        <begin position="1820"/>
        <end position="1986"/>
    </location>
</feature>
<feature type="domain" description="mRNA cap 0-1 NS5-type MT" evidence="17">
    <location>
        <begin position="2492"/>
        <end position="2753"/>
    </location>
</feature>
<feature type="domain" description="RdRp catalytic" evidence="12">
    <location>
        <begin position="3018"/>
        <end position="3168"/>
    </location>
</feature>
<feature type="region of interest" description="Interaction with host EXOC1" evidence="5">
    <location>
        <begin position="1"/>
        <end position="15"/>
    </location>
</feature>
<feature type="region of interest" description="Hydrophobic; homodimerization of capsid protein C" evidence="6">
    <location>
        <begin position="37"/>
        <end position="72"/>
    </location>
</feature>
<feature type="region of interest" description="Fusion peptide" evidence="3">
    <location>
        <begin position="378"/>
        <end position="391"/>
    </location>
</feature>
<feature type="region of interest" description="Interacts with and activates NS3 protease" evidence="15">
    <location>
        <begin position="1396"/>
        <end position="1435"/>
    </location>
</feature>
<feature type="region of interest" description="Important for RNA-binding" evidence="4">
    <location>
        <begin position="1658"/>
        <end position="1661"/>
    </location>
</feature>
<feature type="short sequence motif" description="DEAH box" evidence="13">
    <location>
        <begin position="1758"/>
        <end position="1761"/>
    </location>
</feature>
<feature type="short sequence motif" description="SUMO-interacting motif" evidence="6">
    <location>
        <begin position="2567"/>
        <end position="2570"/>
    </location>
</feature>
<feature type="active site" description="Charge relay system; for serine protease NS3 activity" evidence="16">
    <location>
        <position position="1524"/>
    </location>
</feature>
<feature type="active site" description="Charge relay system; for serine protease NS3 activity" evidence="16">
    <location>
        <position position="1548"/>
    </location>
</feature>
<feature type="active site" description="Charge relay system; for serine protease NS3 activity" evidence="16">
    <location>
        <position position="1608"/>
    </location>
</feature>
<feature type="active site" description="For 2'-O-MTase activity" evidence="20">
    <location>
        <position position="2551"/>
    </location>
</feature>
<feature type="active site" description="For 2'-O-MTase activity" evidence="20">
    <location>
        <position position="2636"/>
    </location>
</feature>
<feature type="active site" description="For 2'-O-MTase activity" evidence="20">
    <location>
        <position position="2670"/>
    </location>
</feature>
<feature type="active site" description="For 2'-O-MTase activity" evidence="20">
    <location>
        <position position="2706"/>
    </location>
</feature>
<feature type="binding site" evidence="13">
    <location>
        <begin position="1667"/>
        <end position="1674"/>
    </location>
    <ligand>
        <name>ATP</name>
        <dbReference type="ChEBI" id="CHEBI:30616"/>
    </ligand>
</feature>
<feature type="binding site" evidence="17">
    <location>
        <position position="2546"/>
    </location>
    <ligand>
        <name>S-adenosyl-L-methionine</name>
        <dbReference type="ChEBI" id="CHEBI:59789"/>
    </ligand>
</feature>
<feature type="binding site" evidence="17">
    <location>
        <position position="2576"/>
    </location>
    <ligand>
        <name>S-adenosyl-L-methionine</name>
        <dbReference type="ChEBI" id="CHEBI:59789"/>
    </ligand>
</feature>
<feature type="binding site" evidence="17">
    <location>
        <position position="2577"/>
    </location>
    <ligand>
        <name>S-adenosyl-L-methionine</name>
        <dbReference type="ChEBI" id="CHEBI:59789"/>
    </ligand>
</feature>
<feature type="binding site" evidence="17">
    <location>
        <position position="2594"/>
    </location>
    <ligand>
        <name>S-adenosyl-L-methionine</name>
        <dbReference type="ChEBI" id="CHEBI:59789"/>
    </ligand>
</feature>
<feature type="binding site" evidence="17">
    <location>
        <position position="2595"/>
    </location>
    <ligand>
        <name>S-adenosyl-L-methionine</name>
        <dbReference type="ChEBI" id="CHEBI:59789"/>
    </ligand>
</feature>
<feature type="binding site" evidence="17">
    <location>
        <position position="2621"/>
    </location>
    <ligand>
        <name>S-adenosyl-L-methionine</name>
        <dbReference type="ChEBI" id="CHEBI:59789"/>
    </ligand>
</feature>
<feature type="binding site" evidence="17">
    <location>
        <position position="2622"/>
    </location>
    <ligand>
        <name>S-adenosyl-L-methionine</name>
        <dbReference type="ChEBI" id="CHEBI:59789"/>
    </ligand>
</feature>
<feature type="binding site" evidence="17">
    <location>
        <position position="2637"/>
    </location>
    <ligand>
        <name>S-adenosyl-L-methionine</name>
        <dbReference type="ChEBI" id="CHEBI:59789"/>
    </ligand>
</feature>
<feature type="binding site" evidence="17">
    <location>
        <position position="2708"/>
    </location>
    <ligand>
        <name>S-adenosyl-L-methionine</name>
        <dbReference type="ChEBI" id="CHEBI:59789"/>
    </ligand>
</feature>
<feature type="binding site" evidence="18">
    <location>
        <position position="2927"/>
    </location>
    <ligand>
        <name>Zn(2+)</name>
        <dbReference type="ChEBI" id="CHEBI:29105"/>
        <label>1</label>
    </ligand>
</feature>
<feature type="binding site" evidence="18">
    <location>
        <position position="2931"/>
    </location>
    <ligand>
        <name>Zn(2+)</name>
        <dbReference type="ChEBI" id="CHEBI:29105"/>
        <label>1</label>
    </ligand>
</feature>
<feature type="binding site" evidence="18">
    <location>
        <position position="2936"/>
    </location>
    <ligand>
        <name>Zn(2+)</name>
        <dbReference type="ChEBI" id="CHEBI:29105"/>
        <label>1</label>
    </ligand>
</feature>
<feature type="binding site" evidence="18">
    <location>
        <position position="2939"/>
    </location>
    <ligand>
        <name>Zn(2+)</name>
        <dbReference type="ChEBI" id="CHEBI:29105"/>
        <label>1</label>
    </ligand>
</feature>
<feature type="binding site" evidence="18">
    <location>
        <position position="3202"/>
    </location>
    <ligand>
        <name>Zn(2+)</name>
        <dbReference type="ChEBI" id="CHEBI:29105"/>
        <label>2</label>
    </ligand>
</feature>
<feature type="binding site" evidence="18">
    <location>
        <position position="3218"/>
    </location>
    <ligand>
        <name>Zn(2+)</name>
        <dbReference type="ChEBI" id="CHEBI:29105"/>
        <label>2</label>
    </ligand>
</feature>
<feature type="binding site" evidence="18">
    <location>
        <position position="3337"/>
    </location>
    <ligand>
        <name>Zn(2+)</name>
        <dbReference type="ChEBI" id="CHEBI:29105"/>
        <label>2</label>
    </ligand>
</feature>
<feature type="site" description="Cleavage; by viral protease NS3" evidence="6">
    <location>
        <begin position="100"/>
        <end position="101"/>
    </location>
</feature>
<feature type="site" description="Cleavage; by host signal peptidase" evidence="6">
    <location>
        <begin position="114"/>
        <end position="115"/>
    </location>
</feature>
<feature type="site" description="Cleavage; by host furin" evidence="6 10">
    <location>
        <begin position="205"/>
        <end position="206"/>
    </location>
</feature>
<feature type="site" description="Cleavage; by host signal peptidase" evidence="6">
    <location>
        <begin position="280"/>
        <end position="281"/>
    </location>
</feature>
<feature type="site" description="Cleavage; by host signal peptidase" evidence="6">
    <location>
        <begin position="773"/>
        <end position="774"/>
    </location>
</feature>
<feature type="site" description="Cleavage; by host" evidence="6">
    <location>
        <begin position="1125"/>
        <end position="1126"/>
    </location>
</feature>
<feature type="site" description="Cleavage; by viral protease NS3" evidence="6">
    <location>
        <begin position="1343"/>
        <end position="1344"/>
    </location>
</feature>
<feature type="site" description="Cleavage; by autolysis" evidence="6">
    <location>
        <begin position="1473"/>
        <end position="1474"/>
    </location>
</feature>
<feature type="site" description="Involved in NS3 ATPase and RTPase activities" evidence="2">
    <location>
        <position position="1931"/>
    </location>
</feature>
<feature type="site" description="Involved in NS3 ATPase and RTPase activities" evidence="2">
    <location>
        <position position="1934"/>
    </location>
</feature>
<feature type="site" description="Cleavage; by autolysis" evidence="6">
    <location>
        <begin position="2092"/>
        <end position="2093"/>
    </location>
</feature>
<feature type="site" description="Cleavage; by viral protease NS3" evidence="6">
    <location>
        <begin position="2219"/>
        <end position="2220"/>
    </location>
</feature>
<feature type="site" description="Cleavage; by host signal peptidase" evidence="6">
    <location>
        <begin position="2242"/>
        <end position="2243"/>
    </location>
</feature>
<feature type="site" description="Cleavage; by viral protease NS3" evidence="6">
    <location>
        <begin position="2490"/>
        <end position="2491"/>
    </location>
</feature>
<feature type="site" description="mRNA cap binding" evidence="17">
    <location>
        <position position="2504"/>
    </location>
</feature>
<feature type="site" description="mRNA cap binding; via carbonyl oxygen" evidence="17">
    <location>
        <position position="2507"/>
    </location>
</feature>
<feature type="site" description="mRNA cap binding" evidence="17">
    <location>
        <position position="2508"/>
    </location>
</feature>
<feature type="site" description="mRNA cap binding; via carbonyl oxygen" evidence="17">
    <location>
        <position position="2510"/>
    </location>
</feature>
<feature type="site" description="mRNA cap binding" evidence="17">
    <location>
        <position position="2515"/>
    </location>
</feature>
<feature type="site" description="mRNA cap binding" evidence="17">
    <location>
        <position position="2519"/>
    </location>
</feature>
<feature type="site" description="Essential for 2'-O-methyltransferase activity" evidence="17">
    <location>
        <position position="2551"/>
    </location>
</feature>
<feature type="site" description="Essential for 2'-O-methyltransferase and N-7 methyltransferase activity" evidence="17">
    <location>
        <position position="2636"/>
    </location>
</feature>
<feature type="site" description="mRNA cap binding" evidence="17">
    <location>
        <position position="2640"/>
    </location>
</feature>
<feature type="site" description="Essential for 2'-O-methyltransferase activity" evidence="17">
    <location>
        <position position="2670"/>
    </location>
</feature>
<feature type="site" description="mRNA cap binding" evidence="17">
    <location>
        <position position="2701"/>
    </location>
</feature>
<feature type="site" description="mRNA cap binding" evidence="17">
    <location>
        <position position="2703"/>
    </location>
</feature>
<feature type="site" description="Essential for 2'-O-methyltransferase activity" evidence="17">
    <location>
        <position position="2706"/>
    </location>
</feature>
<feature type="modified residue" description="N6-acetyllysine; by host" evidence="8">
    <location>
        <position position="1862"/>
    </location>
</feature>
<feature type="modified residue" description="Phosphoserine" evidence="1">
    <location>
        <position position="2546"/>
    </location>
</feature>
<feature type="glycosylation site" description="N-linked (GlcNAc...) asparagine; by host" evidence="11">
    <location>
        <position position="183"/>
    </location>
</feature>
<feature type="glycosylation site" description="N-linked (GlcNAc...) asparagine; by host" evidence="11">
    <location>
        <position position="347"/>
    </location>
</feature>
<feature type="glycosylation site" description="N-linked (GlcNAc...) asparagine; by host" evidence="11">
    <location>
        <position position="433"/>
    </location>
</feature>
<feature type="glycosylation site" description="N-linked (GlcNAc...) asparagine; by host" evidence="11">
    <location>
        <position position="903"/>
    </location>
</feature>
<feature type="glycosylation site" description="N-linked (GlcNAc...) asparagine; by host" evidence="11">
    <location>
        <position position="980"/>
    </location>
</feature>
<feature type="glycosylation site" description="N-linked (GlcNAc...) asparagine; by host" evidence="11">
    <location>
        <position position="1132"/>
    </location>
</feature>
<feature type="glycosylation site" description="N-linked (GlcNAc...) asparagine; by host" evidence="11">
    <location>
        <position position="1188"/>
    </location>
</feature>
<feature type="glycosylation site" description="N-linked (GlcNAc...) asparagine; by host" evidence="11">
    <location>
        <position position="2300"/>
    </location>
</feature>
<feature type="glycosylation site" description="N-linked (GlcNAc...) asparagine; by host" evidence="11">
    <location>
        <position position="2304"/>
    </location>
</feature>
<feature type="glycosylation site" description="N-linked (GlcNAc...) asparagine; by host" evidence="11">
    <location>
        <position position="2456"/>
    </location>
</feature>
<feature type="disulfide bond" evidence="5">
    <location>
        <begin position="283"/>
        <end position="310"/>
    </location>
</feature>
<feature type="disulfide bond" evidence="5">
    <location>
        <begin position="340"/>
        <end position="401"/>
    </location>
</feature>
<feature type="disulfide bond" evidence="5">
    <location>
        <begin position="354"/>
        <end position="385"/>
    </location>
</feature>
<feature type="disulfide bond" evidence="5">
    <location>
        <begin position="372"/>
        <end position="396"/>
    </location>
</feature>
<feature type="disulfide bond" evidence="5">
    <location>
        <begin position="463"/>
        <end position="563"/>
    </location>
</feature>
<feature type="disulfide bond" evidence="5">
    <location>
        <begin position="580"/>
        <end position="611"/>
    </location>
</feature>
<feature type="disulfide bond" evidence="5">
    <location>
        <begin position="777"/>
        <end position="788"/>
    </location>
</feature>
<feature type="disulfide bond" evidence="5">
    <location>
        <begin position="828"/>
        <end position="916"/>
    </location>
</feature>
<feature type="disulfide bond" evidence="5">
    <location>
        <begin position="952"/>
        <end position="996"/>
    </location>
</feature>
<feature type="disulfide bond" evidence="5">
    <location>
        <begin position="1053"/>
        <end position="1102"/>
    </location>
</feature>
<feature type="disulfide bond" evidence="5">
    <location>
        <begin position="1064"/>
        <end position="1086"/>
    </location>
</feature>
<feature type="disulfide bond" evidence="5">
    <location>
        <begin position="1085"/>
        <end position="1089"/>
    </location>
</feature>
<feature type="sequence variant">
    <original>Q</original>
    <variation>K</variation>
    <location>
        <position position="97"/>
    </location>
</feature>
<feature type="sequence variant">
    <original>E</original>
    <variation>A</variation>
    <location>
        <position position="684"/>
    </location>
</feature>
<feature type="sequence variant">
    <original>L</original>
    <variation>I</variation>
    <location>
        <position position="867"/>
    </location>
</feature>
<feature type="sequence variant">
    <original>T</original>
    <variation>S</variation>
    <location>
        <position position="1006"/>
    </location>
</feature>
<feature type="sequence variant">
    <original>L</original>
    <variation>M</variation>
    <location>
        <position position="1148"/>
    </location>
</feature>
<feature type="sequence variant">
    <original>V</original>
    <variation>I</variation>
    <location>
        <position position="1252"/>
    </location>
</feature>
<feature type="sequence variant">
    <original>P</original>
    <variation>A</variation>
    <location>
        <position position="1400"/>
    </location>
</feature>
<feature type="sequence variant">
    <original>T</original>
    <variation>M</variation>
    <location>
        <position position="1585"/>
    </location>
</feature>
<feature type="sequence variant">
    <original>T</original>
    <variation>S</variation>
    <location>
        <position position="1871"/>
    </location>
</feature>
<feature type="sequence variant">
    <original>K</original>
    <variation>R</variation>
    <location>
        <position position="2063"/>
    </location>
</feature>
<feature type="sequence variant">
    <original>D</original>
    <variation>H</variation>
    <location>
        <position position="2128"/>
    </location>
</feature>
<feature type="sequence variant">
    <original>T</original>
    <variation>I</variation>
    <location>
        <position position="2239"/>
    </location>
</feature>
<feature type="sequence variant">
    <original>S</original>
    <variation>P</variation>
    <location>
        <position position="2399"/>
    </location>
</feature>
<feature type="sequence variant">
    <original>F</original>
    <variation>Y</variation>
    <location>
        <position position="2402"/>
    </location>
</feature>
<feature type="sequence variant">
    <original>M</original>
    <variation>L</variation>
    <location>
        <position position="2856"/>
    </location>
</feature>
<feature type="sequence variant">
    <original>A</original>
    <variation>V</variation>
    <location>
        <position position="2862"/>
    </location>
</feature>
<feature type="sequence variant">
    <original>E</original>
    <variation>G</variation>
    <location>
        <position position="2864"/>
    </location>
</feature>
<feature type="sequence variant">
    <original>A</original>
    <variation>V</variation>
    <location>
        <position position="2970"/>
    </location>
</feature>
<feature type="sequence variant">
    <original>L</original>
    <variation>V</variation>
    <location>
        <position position="3093"/>
    </location>
</feature>
<feature type="mutagenesis site" description="90% loss of 2'-O-MTase activity." evidence="20">
    <original>R</original>
    <variation>A</variation>
    <location>
        <position position="2528"/>
    </location>
</feature>
<feature type="mutagenesis site" description="25% loss of 2'-O-MTase activity." evidence="20">
    <original>K</original>
    <variation>A</variation>
    <location>
        <position position="2532"/>
    </location>
</feature>
<feature type="mutagenesis site" description="Complete loss of 2'-O-MTase activity." evidence="20">
    <original>R</original>
    <variation>A</variation>
    <location>
        <position position="2547"/>
    </location>
</feature>
<feature type="mutagenesis site" description="Complete loss of 2'-O-MTase activity." evidence="20">
    <original>K</original>
    <variation>A</variation>
    <location>
        <position position="2551"/>
    </location>
</feature>
<feature type="mutagenesis site" description="40% loss of 2'-O-MTase activity." evidence="20">
    <original>R</original>
    <variation>A</variation>
    <location>
        <position position="2574"/>
    </location>
</feature>
<feature type="mutagenesis site" description="Complete loss of 2'-O-MTase activity. Decreased thermostability both in the presence and absence of the RNA ligand." evidence="20">
    <original>E</original>
    <variation>R</variation>
    <location>
        <position position="2601"/>
    </location>
</feature>
<feature type="mutagenesis site" description="Complete loss of 2'-O-MTase activity." evidence="20">
    <original>D</original>
    <variation>A</variation>
    <location>
        <position position="2636"/>
    </location>
</feature>
<feature type="mutagenesis site" description="Complete loss of 2'-O-MTase activity." evidence="20">
    <original>K</original>
    <variation>A</variation>
    <location>
        <position position="2670"/>
    </location>
</feature>
<feature type="mutagenesis site" description="98% loss of 2'-O-MTase activity." evidence="20">
    <original>R</original>
    <variation>A</variation>
    <location>
        <position position="2701"/>
    </location>
</feature>
<feature type="mutagenesis site" description="Complete loss of 2'-O-MTase activity." evidence="20">
    <original>E</original>
    <variation>A</variation>
    <location>
        <position position="2706"/>
    </location>
</feature>
<feature type="helix" evidence="22">
    <location>
        <begin position="2499"/>
        <end position="2509"/>
    </location>
</feature>
<feature type="helix" evidence="22">
    <location>
        <begin position="2512"/>
        <end position="2519"/>
    </location>
</feature>
<feature type="turn" evidence="22">
    <location>
        <begin position="2520"/>
        <end position="2522"/>
    </location>
</feature>
<feature type="strand" evidence="22">
    <location>
        <begin position="2524"/>
        <end position="2527"/>
    </location>
</feature>
<feature type="helix" evidence="22">
    <location>
        <begin position="2529"/>
        <end position="2536"/>
    </location>
</feature>
<feature type="helix" evidence="22">
    <location>
        <begin position="2548"/>
        <end position="2557"/>
    </location>
</feature>
<feature type="strand" evidence="22">
    <location>
        <begin position="2565"/>
        <end position="2570"/>
    </location>
</feature>
<feature type="helix" evidence="22">
    <location>
        <begin position="2576"/>
        <end position="2581"/>
    </location>
</feature>
<feature type="strand" evidence="22">
    <location>
        <begin position="2587"/>
        <end position="2593"/>
    </location>
</feature>
<feature type="helix" evidence="22">
    <location>
        <begin position="2611"/>
        <end position="2613"/>
    </location>
</feature>
<feature type="strand" evidence="22">
    <location>
        <begin position="2614"/>
        <end position="2617"/>
    </location>
</feature>
<feature type="helix" evidence="22">
    <location>
        <begin position="2622"/>
        <end position="2624"/>
    </location>
</feature>
<feature type="strand" evidence="22">
    <location>
        <begin position="2631"/>
        <end position="2635"/>
    </location>
</feature>
<feature type="helix" evidence="22">
    <location>
        <begin position="2644"/>
        <end position="2658"/>
    </location>
</feature>
<feature type="helix" evidence="22">
    <location>
        <begin position="2659"/>
        <end position="2661"/>
    </location>
</feature>
<feature type="strand" evidence="22">
    <location>
        <begin position="2666"/>
        <end position="2672"/>
    </location>
</feature>
<feature type="helix" evidence="22">
    <location>
        <begin position="2677"/>
        <end position="2690"/>
    </location>
</feature>
<feature type="strand" evidence="22">
    <location>
        <begin position="2693"/>
        <end position="2695"/>
    </location>
</feature>
<feature type="strand" evidence="22">
    <location>
        <begin position="2707"/>
        <end position="2712"/>
    </location>
</feature>
<feature type="helix" evidence="22">
    <location>
        <begin position="2717"/>
        <end position="2730"/>
    </location>
</feature>
<feature type="strand" evidence="22">
    <location>
        <begin position="2733"/>
        <end position="2735"/>
    </location>
</feature>
<feature type="strand" evidence="22">
    <location>
        <begin position="2740"/>
        <end position="2743"/>
    </location>
</feature>
<feature type="helix" evidence="27">
    <location>
        <begin position="2754"/>
        <end position="2756"/>
    </location>
</feature>
<feature type="helix" evidence="27">
    <location>
        <begin position="2763"/>
        <end position="2776"/>
    </location>
</feature>
<feature type="turn" evidence="27">
    <location>
        <begin position="2777"/>
        <end position="2780"/>
    </location>
</feature>
<feature type="strand" evidence="27">
    <location>
        <begin position="2790"/>
        <end position="2800"/>
    </location>
</feature>
<feature type="helix" evidence="27">
    <location>
        <begin position="2812"/>
        <end position="2816"/>
    </location>
</feature>
<feature type="helix" evidence="27">
    <location>
        <begin position="2819"/>
        <end position="2823"/>
    </location>
</feature>
<feature type="helix" evidence="27">
    <location>
        <begin position="2825"/>
        <end position="2830"/>
    </location>
</feature>
<feature type="helix" evidence="27">
    <location>
        <begin position="2837"/>
        <end position="2847"/>
    </location>
</feature>
<feature type="helix" evidence="27">
    <location>
        <begin position="2857"/>
        <end position="2874"/>
    </location>
</feature>
<feature type="turn" evidence="26">
    <location>
        <begin position="2875"/>
        <end position="2877"/>
    </location>
</feature>
<feature type="helix" evidence="27">
    <location>
        <begin position="2885"/>
        <end position="2893"/>
    </location>
</feature>
<feature type="helix" evidence="27">
    <location>
        <begin position="2909"/>
        <end position="2916"/>
    </location>
</feature>
<feature type="helix" evidence="27">
    <location>
        <begin position="2918"/>
        <end position="2932"/>
    </location>
</feature>
<feature type="strand" evidence="21">
    <location>
        <begin position="2941"/>
        <end position="2944"/>
    </location>
</feature>
<feature type="turn" evidence="28">
    <location>
        <begin position="2951"/>
        <end position="2956"/>
    </location>
</feature>
<feature type="helix" evidence="27">
    <location>
        <begin position="2961"/>
        <end position="2978"/>
    </location>
</feature>
<feature type="helix" evidence="27">
    <location>
        <begin position="2980"/>
        <end position="2983"/>
    </location>
</feature>
<feature type="turn" evidence="27">
    <location>
        <begin position="2984"/>
        <end position="2987"/>
    </location>
</feature>
<feature type="helix" evidence="27">
    <location>
        <begin position="2989"/>
        <end position="2992"/>
    </location>
</feature>
<feature type="strand" evidence="27">
    <location>
        <begin position="2993"/>
        <end position="2995"/>
    </location>
</feature>
<feature type="turn" evidence="27">
    <location>
        <begin position="2997"/>
        <end position="2999"/>
    </location>
</feature>
<feature type="helix" evidence="27">
    <location>
        <begin position="3001"/>
        <end position="3012"/>
    </location>
</feature>
<feature type="strand" evidence="21">
    <location>
        <begin position="3014"/>
        <end position="3017"/>
    </location>
</feature>
<feature type="helix" evidence="27">
    <location>
        <begin position="3027"/>
        <end position="3030"/>
    </location>
</feature>
<feature type="helix" evidence="27">
    <location>
        <begin position="3033"/>
        <end position="3039"/>
    </location>
</feature>
<feature type="helix" evidence="27">
    <location>
        <begin position="3040"/>
        <end position="3045"/>
    </location>
</feature>
<feature type="helix" evidence="27">
    <location>
        <begin position="3048"/>
        <end position="3060"/>
    </location>
</feature>
<feature type="strand" evidence="27">
    <location>
        <begin position="3063"/>
        <end position="3073"/>
    </location>
</feature>
<feature type="strand" evidence="27">
    <location>
        <begin position="3076"/>
        <end position="3087"/>
    </location>
</feature>
<feature type="strand" evidence="25">
    <location>
        <begin position="3090"/>
        <end position="3092"/>
    </location>
</feature>
<feature type="helix" evidence="27">
    <location>
        <begin position="3095"/>
        <end position="3114"/>
    </location>
</feature>
<feature type="helix" evidence="27">
    <location>
        <begin position="3120"/>
        <end position="3124"/>
    </location>
</feature>
<feature type="helix" evidence="27">
    <location>
        <begin position="3131"/>
        <end position="3145"/>
    </location>
</feature>
<feature type="strand" evidence="27">
    <location>
        <begin position="3148"/>
        <end position="3151"/>
    </location>
</feature>
<feature type="strand" evidence="27">
    <location>
        <begin position="3154"/>
        <end position="3157"/>
    </location>
</feature>
<feature type="helix" evidence="27">
    <location>
        <begin position="3162"/>
        <end position="3166"/>
    </location>
</feature>
<feature type="helix" evidence="27">
    <location>
        <begin position="3169"/>
        <end position="3173"/>
    </location>
</feature>
<feature type="strand" evidence="23">
    <location>
        <begin position="3178"/>
        <end position="3181"/>
    </location>
</feature>
<feature type="strand" evidence="27">
    <location>
        <begin position="3190"/>
        <end position="3192"/>
    </location>
</feature>
<feature type="helix" evidence="27">
    <location>
        <begin position="3193"/>
        <end position="3195"/>
    </location>
</feature>
<feature type="strand" evidence="27">
    <location>
        <begin position="3201"/>
        <end position="3207"/>
    </location>
</feature>
<feature type="strand" evidence="27">
    <location>
        <begin position="3213"/>
        <end position="3218"/>
    </location>
</feature>
<feature type="helix" evidence="27">
    <location>
        <begin position="3221"/>
        <end position="3228"/>
    </location>
</feature>
<feature type="strand" evidence="21">
    <location>
        <begin position="3230"/>
        <end position="3234"/>
    </location>
</feature>
<feature type="helix" evidence="27">
    <location>
        <begin position="3238"/>
        <end position="3255"/>
    </location>
</feature>
<feature type="helix" evidence="27">
    <location>
        <begin position="3260"/>
        <end position="3272"/>
    </location>
</feature>
<feature type="strand" evidence="27">
    <location>
        <begin position="3294"/>
        <end position="3297"/>
    </location>
</feature>
<feature type="helix" evidence="27">
    <location>
        <begin position="3299"/>
        <end position="3307"/>
    </location>
</feature>
<feature type="turn" evidence="23">
    <location>
        <begin position="3308"/>
        <end position="3310"/>
    </location>
</feature>
<feature type="helix" evidence="27">
    <location>
        <begin position="3323"/>
        <end position="3325"/>
    </location>
</feature>
<feature type="helix" evidence="27">
    <location>
        <begin position="3331"/>
        <end position="3336"/>
    </location>
</feature>
<feature type="helix" evidence="27">
    <location>
        <begin position="3344"/>
        <end position="3364"/>
    </location>
</feature>
<feature type="helix" evidence="24">
    <location>
        <begin position="3373"/>
        <end position="3375"/>
    </location>
</feature>
<comment type="function">
    <molecule>Capsid protein C</molecule>
    <text evidence="5">Plays a role in virus budding by binding to the cell membrane and gathering the viral RNA into a nucleocapsid that forms the core of a mature virus particle. During virus entry, may induce genome penetration into the host cytoplasm after hemifusion induced by the surface proteins. Can migrate to the cell nucleus where it modulates host functions. Overcomes the anti-viral effects of host EXOC1 by sequestering and degrading the latter through the proteasome degradation pathway.</text>
</comment>
<comment type="function">
    <molecule>Capsid protein C</molecule>
    <text evidence="1">Inhibits RNA silencing by interfering with host Dicer.</text>
</comment>
<comment type="function">
    <molecule>Peptide pr</molecule>
    <text evidence="5">Prevents premature fusion activity of envelope proteins in trans-Golgi by binding to envelope protein E at pH6.0. After virion release in extracellular space, gets dissociated from E dimers.</text>
</comment>
<comment type="function">
    <molecule>Protein prM</molecule>
    <text evidence="5">Acts as a chaperone for envelope protein E during intracellular virion assembly by masking and inactivating envelope protein E fusion peptide. prM is the only viral peptide matured by host furin in the trans-Golgi network probably to avoid catastrophic activation of the viral fusion activity in acidic Golgi compartment prior to virion release. prM-E cleavage is inefficient, and many virions are only partially matured. These uncleaved prM would play a role in immune evasion.</text>
</comment>
<comment type="function">
    <molecule>Small envelope protein M</molecule>
    <text evidence="5">May play a role in virus budding. Exerts cytotoxic effects by activating a mitochondrial apoptotic pathway through M ectodomain. May display a viroporin activity.</text>
</comment>
<comment type="function">
    <molecule>Envelope protein E</molecule>
    <text evidence="5">Binds to host cell surface receptor and mediates fusion between viral and cellular membranes. Envelope protein is synthesized in the endoplasmic reticulum in the form of heterodimer with protein prM. They play a role in virion budding in the ER, and the newly formed immature particle is covered with 60 spikes composed of heterodimer between precursor prM and envelope protein E. The virion is transported to the Golgi apparatus where the low pH causes dissociation of PrM-E heterodimers and formation of E homodimers. prM-E cleavage is inefficient, and many virions are only partially matured. These uncleaved prM would play a role in immune evasion.</text>
</comment>
<comment type="function">
    <molecule>Non-structural protein 1</molecule>
    <text evidence="9">Involved in immune evasion, pathogenesis and viral replication. Once cleaved off the polyprotein, is targeted to three destinations: the viral replication cycle, the plasma membrane and the extracellular compartment. Essential for viral replication. Required for formation of the replication complex and recruitment of other non-structural proteins to the ER-derived membrane structures. Excreted as a hexameric lipoparticle that plays a role against host immune response. Antagonizing the complement function. Binds to the host macrophages and dendritic cells. Inhibits signal transduction originating from Toll-like receptor 3 (TLR3).</text>
</comment>
<comment type="function">
    <molecule>Non-structural protein 1</molecule>
    <text evidence="5">Disrupts the host endothelial glycocalyx layer of host pulmonary microvascular endothelial cells, inducing degradation of sialic acid and shedding of heparan sulfate proteoglycans. NS1 induces expression of sialidases, heparanase, and activates cathepsin L, which activates heparanase via enzymatic cleavage. These effects are probably linked to the endothelial hyperpermeability observed in severe dengue disease.</text>
</comment>
<comment type="function">
    <molecule>Non-structural protein 2A</molecule>
    <text evidence="5">Component of the viral RNA replication complex that functions in virion assembly and antagonizes the host immune response.</text>
</comment>
<comment type="function">
    <molecule>Serine protease subunit NS2B</molecule>
    <text evidence="5 15">Required cofactor for the serine protease function of NS3. May have membrane-destabilizing activity and form viroporins (By similarity).</text>
</comment>
<comment type="function">
    <molecule>Serine protease NS3</molecule>
    <text evidence="16">Displays three enzymatic activities: serine protease, NTPase and RNA helicase. NS3 serine protease, in association with NS2B, performs its autocleavage and cleaves the polyprotein at dibasic sites in the cytoplasm: C-prM, NS2A-NS2B, NS2B-NS3, NS3-NS4A, NS4A-2K and NS4B-NS5. NS3 RNA helicase binds RNA and unwinds dsRNA in the 3' to 5' direction.</text>
</comment>
<comment type="function">
    <molecule>Non-structural protein 4A</molecule>
    <text evidence="5 7 9">Regulates the ATPase activity of the NS3 helicase activity. NS4A allows NS3 helicase to conserve energy during unwinding. Plays a role in the inhibition of the host innate immune response. Interacts with host MAVS and thereby prevents the interaction between RIGI and MAVS. In turn, IFN-beta production is impaired. Interacts with host AUP1 which mediates induction of lipophagy in host cells and facilitates production of virus progeny particles (By similarity).</text>
</comment>
<comment type="function">
    <molecule>Peptide 2k</molecule>
    <text evidence="5">Functions as a signal peptide for NS4B and is required for the interferon antagonism activity of the latter.</text>
</comment>
<comment type="function">
    <molecule>Non-structural protein 4B</molecule>
    <text evidence="9">Induces the formation of ER-derived membrane vesicles where the viral replication takes place. Inhibits interferon (IFN)-induced host STAT1 phosphorylation and nuclear translocation, thereby preventing the establishment of cellular antiviral state by blocking the IFN-alpha/beta pathway.</text>
</comment>
<comment type="function">
    <molecule>RNA-directed RNA polymerase NS5</molecule>
    <text evidence="5">Replicates the viral (+) and (-) RNA genome, and performs the capping of genomes in the cytoplasm. NS5 methylates viral RNA cap at guanine N-7 and ribose 2'-O positions. Besides its role in RNA genome replication, also prevents the establishment of cellular antiviral state by blocking the interferon-alpha/beta (IFN-alpha/beta) signaling pathway. Inhibits host TYK2 and STAT2 phosphorylation, thereby preventing activation of JAK-STAT signaling pathway.</text>
</comment>
<comment type="catalytic activity">
    <reaction>
        <text>Selective hydrolysis of -Xaa-Xaa-|-Yaa- bonds in which each of the Xaa can be either Arg or Lys and Yaa can be either Ser or Ala.</text>
        <dbReference type="EC" id="3.4.21.91"/>
    </reaction>
</comment>
<comment type="catalytic activity">
    <reaction evidence="12 19">
        <text>RNA(n) + a ribonucleoside 5'-triphosphate = RNA(n+1) + diphosphate</text>
        <dbReference type="Rhea" id="RHEA:21248"/>
        <dbReference type="Rhea" id="RHEA-COMP:14527"/>
        <dbReference type="Rhea" id="RHEA-COMP:17342"/>
        <dbReference type="ChEBI" id="CHEBI:33019"/>
        <dbReference type="ChEBI" id="CHEBI:61557"/>
        <dbReference type="ChEBI" id="CHEBI:140395"/>
        <dbReference type="EC" id="2.7.7.48"/>
    </reaction>
</comment>
<comment type="catalytic activity">
    <reaction>
        <text>a ribonucleoside 5'-triphosphate + H2O = a ribonucleoside 5'-diphosphate + phosphate + H(+)</text>
        <dbReference type="Rhea" id="RHEA:23680"/>
        <dbReference type="ChEBI" id="CHEBI:15377"/>
        <dbReference type="ChEBI" id="CHEBI:15378"/>
        <dbReference type="ChEBI" id="CHEBI:43474"/>
        <dbReference type="ChEBI" id="CHEBI:57930"/>
        <dbReference type="ChEBI" id="CHEBI:61557"/>
        <dbReference type="EC" id="3.6.1.15"/>
    </reaction>
</comment>
<comment type="catalytic activity">
    <reaction>
        <text>ATP + H2O = ADP + phosphate + H(+)</text>
        <dbReference type="Rhea" id="RHEA:13065"/>
        <dbReference type="ChEBI" id="CHEBI:15377"/>
        <dbReference type="ChEBI" id="CHEBI:15378"/>
        <dbReference type="ChEBI" id="CHEBI:30616"/>
        <dbReference type="ChEBI" id="CHEBI:43474"/>
        <dbReference type="ChEBI" id="CHEBI:456216"/>
        <dbReference type="EC" id="3.6.4.13"/>
    </reaction>
</comment>
<comment type="catalytic activity">
    <molecule>RNA-directed RNA polymerase NS5</molecule>
    <reaction evidence="17 20">
        <text>a 5'-end (5'-triphosphoguanosine)-ribonucleoside in mRNA + S-adenosyl-L-methionine = a 5'-end (N(7)-methyl 5'-triphosphoguanosine)-ribonucleoside in mRNA + S-adenosyl-L-homocysteine</text>
        <dbReference type="Rhea" id="RHEA:67008"/>
        <dbReference type="Rhea" id="RHEA-COMP:17166"/>
        <dbReference type="Rhea" id="RHEA-COMP:17167"/>
        <dbReference type="ChEBI" id="CHEBI:57856"/>
        <dbReference type="ChEBI" id="CHEBI:59789"/>
        <dbReference type="ChEBI" id="CHEBI:156461"/>
        <dbReference type="ChEBI" id="CHEBI:167617"/>
        <dbReference type="EC" id="2.1.1.56"/>
    </reaction>
</comment>
<comment type="catalytic activity">
    <molecule>RNA-directed RNA polymerase NS5</molecule>
    <reaction evidence="17 20">
        <text>a 5'-end (N(7)-methyl 5'-triphosphoguanosine)-ribonucleoside in mRNA + S-adenosyl-L-methionine = a 5'-end (N(7)-methyl 5'-triphosphoguanosine)-(2'-O-methyl-ribonucleoside) in mRNA + S-adenosyl-L-homocysteine + H(+)</text>
        <dbReference type="Rhea" id="RHEA:67020"/>
        <dbReference type="Rhea" id="RHEA-COMP:17167"/>
        <dbReference type="Rhea" id="RHEA-COMP:17168"/>
        <dbReference type="ChEBI" id="CHEBI:15378"/>
        <dbReference type="ChEBI" id="CHEBI:57856"/>
        <dbReference type="ChEBI" id="CHEBI:59789"/>
        <dbReference type="ChEBI" id="CHEBI:156461"/>
        <dbReference type="ChEBI" id="CHEBI:167609"/>
        <dbReference type="EC" id="2.1.1.57"/>
    </reaction>
</comment>
<comment type="subunit">
    <molecule>Capsid protein C</molecule>
    <text evidence="5">Homodimer. Interacts (via N-terminus) with host EXOC1 (via C-terminus); this interaction results in EXOC1 degradation through the proteasome degradation pathway (By similarity).</text>
</comment>
<comment type="subunit">
    <molecule>Protein prM</molecule>
    <text evidence="5">Forms heterodimers with envelope protein E in the endoplasmic reticulum and Golgi (By similarity).</text>
</comment>
<comment type="subunit">
    <molecule>Envelope protein E</molecule>
    <text evidence="5">Homodimer; in the endoplasmic reticulum and Golgi (By similarity). Interacts with protein prM. Interacts with non-structural protein 1 (By similarity).</text>
</comment>
<comment type="subunit">
    <molecule>Non-structural protein 1</molecule>
    <text evidence="5">Homodimer; Homohexamer when secreted (By similarity). Interacts with envelope protein E (By similarity).</text>
</comment>
<comment type="subunit">
    <molecule>Non-structural protein 2A</molecule>
    <text evidence="5">Interacts (via N-terminus) with serine protease NS3 (By similarity).</text>
</comment>
<comment type="subunit">
    <molecule>Serine protease subunit NS2B</molecule>
    <text evidence="5">Forms a heterodimer with serine protease NS3 (By similarity). May form homooligomers (By similarity).</text>
</comment>
<comment type="subunit">
    <molecule>Serine protease NS3</molecule>
    <text evidence="5">Forms a heterodimer with NS2B. Interacts with NS4B (By similarity). Interacts with unphosphorylated RNA-directed RNA polymerase NS5; this interaction stimulates RNA-directed RNA polymerase NS5 guanylyltransferase activity (By similarity). Interacts with host SHFL (By similarity).</text>
</comment>
<comment type="subunit">
    <molecule>Non-structural protein 4A</molecule>
    <text evidence="5 7">Interacts with host MAVS; this interaction inhibits the synthesis of IFN-beta (By similarity). Interacts with host SHFL (By similarity). Interacts with host AUP1; the interaction occurs in the presence of Dengue virus NS4B and induces lipophagy which facilitates production of virus progeny particles (By similarity).</text>
</comment>
<comment type="subunit">
    <molecule>Non-structural protein 4B</molecule>
    <text evidence="5">Interacts with serine protease NS3.</text>
</comment>
<comment type="subunit">
    <molecule>RNA-directed RNA polymerase NS5</molecule>
    <text evidence="19">Homodimer (PubMed:24025331). Interacts with host STAT2; this interaction inhibits the phosphorylation of the latter, and, when all viral proteins are present (polyprotein), targets STAT2 for degradation. Interacts with serine protease NS3.</text>
</comment>
<comment type="subcellular location">
    <molecule>Capsid protein C</molecule>
    <subcellularLocation>
        <location evidence="5">Virion</location>
    </subcellularLocation>
    <subcellularLocation>
        <location evidence="5">Host nucleus</location>
    </subcellularLocation>
    <subcellularLocation>
        <location evidence="5">Host cytoplasm</location>
    </subcellularLocation>
    <subcellularLocation>
        <location evidence="5">Host cytoplasm</location>
        <location evidence="5">Host perinuclear region</location>
    </subcellularLocation>
</comment>
<comment type="subcellular location">
    <molecule>Peptide pr</molecule>
    <subcellularLocation>
        <location evidence="5">Secreted</location>
    </subcellularLocation>
</comment>
<comment type="subcellular location">
    <molecule>Small envelope protein M</molecule>
    <subcellularLocation>
        <location evidence="5">Virion membrane</location>
        <topology evidence="10">Multi-pass membrane protein</topology>
    </subcellularLocation>
    <subcellularLocation>
        <location evidence="5">Host endoplasmic reticulum membrane</location>
        <topology evidence="10">Multi-pass membrane protein</topology>
    </subcellularLocation>
</comment>
<comment type="subcellular location">
    <molecule>Envelope protein E</molecule>
    <subcellularLocation>
        <location evidence="5">Virion membrane</location>
        <topology evidence="10">Multi-pass membrane protein</topology>
    </subcellularLocation>
    <subcellularLocation>
        <location evidence="5">Host endoplasmic reticulum membrane</location>
        <topology evidence="10">Multi-pass membrane protein</topology>
    </subcellularLocation>
</comment>
<comment type="subcellular location">
    <molecule>Non-structural protein 1</molecule>
    <subcellularLocation>
        <location evidence="5">Secreted</location>
    </subcellularLocation>
    <subcellularLocation>
        <location>Host endoplasmic reticulum membrane</location>
        <topology>Peripheral membrane protein</topology>
        <orientation evidence="5">Lumenal side</orientation>
    </subcellularLocation>
    <text evidence="9">Located in RE-derived vesicles hosting the replication complex.</text>
</comment>
<comment type="subcellular location">
    <molecule>Non-structural protein 2A</molecule>
    <subcellularLocation>
        <location evidence="5">Host endoplasmic reticulum membrane</location>
        <topology evidence="5">Multi-pass membrane protein</topology>
    </subcellularLocation>
</comment>
<comment type="subcellular location">
    <molecule>Serine protease subunit NS2B</molecule>
    <subcellularLocation>
        <location>Host endoplasmic reticulum membrane</location>
        <topology evidence="5">Multi-pass membrane protein</topology>
    </subcellularLocation>
</comment>
<comment type="subcellular location">
    <molecule>Serine protease NS3</molecule>
    <subcellularLocation>
        <location evidence="16">Host endoplasmic reticulum membrane</location>
        <topology evidence="16">Peripheral membrane protein</topology>
        <orientation evidence="16">Cytoplasmic side</orientation>
    </subcellularLocation>
    <text evidence="16">Remains non-covalently associated to serine protease subunit NS2B.</text>
</comment>
<comment type="subcellular location">
    <molecule>Non-structural protein 4A</molecule>
    <subcellularLocation>
        <location evidence="5">Host endoplasmic reticulum membrane</location>
        <topology evidence="5">Multi-pass membrane protein</topology>
    </subcellularLocation>
    <subcellularLocation>
        <location evidence="5">Host mitochondrion</location>
    </subcellularLocation>
    <text evidence="5">Located in RE-associated vesicles hosting the replication complex. Interacts with host MAVS in the mitochondrion-associated endoplasmic reticulum membranes.</text>
</comment>
<comment type="subcellular location">
    <molecule>Non-structural protein 4B</molecule>
    <subcellularLocation>
        <location evidence="5">Host endoplasmic reticulum membrane</location>
        <topology evidence="5">Multi-pass membrane protein</topology>
    </subcellularLocation>
    <text evidence="9">Located in RE-derived vesicles hosting the replication complex.</text>
</comment>
<comment type="subcellular location">
    <molecule>RNA-directed RNA polymerase NS5</molecule>
    <subcellularLocation>
        <location>Host endoplasmic reticulum membrane</location>
        <topology>Peripheral membrane protein</topology>
        <orientation>Cytoplasmic side</orientation>
    </subcellularLocation>
    <subcellularLocation>
        <location evidence="5">Host nucleus</location>
    </subcellularLocation>
    <text evidence="5">Located in RE-associated vesicles hosting the replication complex. NS5 protein is mainly localized in the nucleus rather than in ER vesicles, especially in the DENV 2, 3, 4 serotypes.</text>
</comment>
<comment type="domain">
    <text evidence="5">The transmembrane domains of the small envelope protein M and envelope protein E contain an endoplasmic reticulum retention signal.</text>
</comment>
<comment type="PTM">
    <molecule>Genome polyprotein</molecule>
    <text evidence="5">Specific enzymatic cleavages in vivo yield mature proteins. Cleavages in the lumen of endoplasmic reticulum are performed by host signal peptidase, whereas cleavages in the cytoplasmic side are performed by serine protease NS3. Signal cleavage at the 2K-4B site requires a prior NS3 protease-mediated cleavage at the 4A-2K site.</text>
</comment>
<comment type="PTM">
    <molecule>Protein prM</molecule>
    <text evidence="5">Cleaved in post-Golgi vesicles by a host furin, releasing the mature small envelope protein M, and peptide pr. This cleavage is incomplete as up to 30% of viral particles still carry uncleaved prM.</text>
</comment>
<comment type="PTM">
    <molecule>Envelope protein E</molecule>
    <text evidence="5">N-glycosylated.</text>
</comment>
<comment type="PTM">
    <molecule>Non-structural protein 1</molecule>
    <text evidence="5">N-glycosylated. The excreted form is glycosylated and this is required for efficient secretion of the protein from infected cells.</text>
</comment>
<comment type="PTM">
    <molecule>Serine protease NS3</molecule>
    <text evidence="8">Acetylated by host KAT5. Acetylation modulates NS3 RNA-binding and unwinding activities and plays an important positive role for viral replication.</text>
</comment>
<comment type="PTM">
    <molecule>RNA-directed RNA polymerase NS5</molecule>
    <text evidence="6">Sumoylation of RNA-directed RNA polymerase NS5 increases NS5 protein stability allowing proper viral RNA replication.</text>
</comment>
<comment type="PTM">
    <molecule>RNA-directed RNA polymerase NS5</molecule>
    <text evidence="5">Phosphorylated on serines residues. This phosphorylation may trigger NS5 nuclear localization.</text>
</comment>
<comment type="similarity">
    <text evidence="17">In the N-terminal section; belongs to the class I-like SAM-binding methyltransferase superfamily. mRNA cap 0-1 NS5-type methyltransferase family.</text>
</comment>
<name>POLG_DEN3S</name>
<keyword id="KW-0002">3D-structure</keyword>
<keyword id="KW-0007">Acetylation</keyword>
<keyword id="KW-1072">Activation of host autophagy by virus</keyword>
<keyword id="KW-0067">ATP-binding</keyword>
<keyword id="KW-0167">Capsid protein</keyword>
<keyword id="KW-1165">Clathrin-mediated endocytosis of virus by host</keyword>
<keyword id="KW-0165">Cleavage on pair of basic residues</keyword>
<keyword id="KW-1015">Disulfide bond</keyword>
<keyword id="KW-1170">Fusion of virus membrane with host endosomal membrane</keyword>
<keyword id="KW-1168">Fusion of virus membrane with host membrane</keyword>
<keyword id="KW-0325">Glycoprotein</keyword>
<keyword id="KW-0347">Helicase</keyword>
<keyword id="KW-1035">Host cytoplasm</keyword>
<keyword id="KW-1038">Host endoplasmic reticulum</keyword>
<keyword id="KW-1043">Host membrane</keyword>
<keyword id="KW-1045">Host mitochondrion</keyword>
<keyword id="KW-1048">Host nucleus</keyword>
<keyword id="KW-0945">Host-virus interaction</keyword>
<keyword id="KW-0378">Hydrolase</keyword>
<keyword id="KW-1090">Inhibition of host innate immune response by virus</keyword>
<keyword id="KW-1114">Inhibition of host interferon signaling pathway by virus</keyword>
<keyword id="KW-1097">Inhibition of host MAVS by virus</keyword>
<keyword id="KW-1113">Inhibition of host RLR pathway by virus</keyword>
<keyword id="KW-1106">Inhibition of host STAT2 by virus</keyword>
<keyword id="KW-1112">Inhibition of host TYK2 by virus</keyword>
<keyword id="KW-0922">Interferon antiviral system evasion</keyword>
<keyword id="KW-0407">Ion channel</keyword>
<keyword id="KW-0406">Ion transport</keyword>
<keyword id="KW-0472">Membrane</keyword>
<keyword id="KW-0479">Metal-binding</keyword>
<keyword id="KW-0489">Methyltransferase</keyword>
<keyword id="KW-0506">mRNA capping</keyword>
<keyword id="KW-0507">mRNA processing</keyword>
<keyword id="KW-0511">Multifunctional enzyme</keyword>
<keyword id="KW-0547">Nucleotide-binding</keyword>
<keyword id="KW-0548">Nucleotidyltransferase</keyword>
<keyword id="KW-0597">Phosphoprotein</keyword>
<keyword id="KW-0645">Protease</keyword>
<keyword id="KW-0694">RNA-binding</keyword>
<keyword id="KW-0696">RNA-directed RNA polymerase</keyword>
<keyword id="KW-0949">S-adenosyl-L-methionine</keyword>
<keyword id="KW-0964">Secreted</keyword>
<keyword id="KW-0720">Serine protease</keyword>
<keyword id="KW-0941">Suppressor of RNA silencing</keyword>
<keyword id="KW-0804">Transcription</keyword>
<keyword id="KW-0805">Transcription regulation</keyword>
<keyword id="KW-0808">Transferase</keyword>
<keyword id="KW-0812">Transmembrane</keyword>
<keyword id="KW-1133">Transmembrane helix</keyword>
<keyword id="KW-0813">Transport</keyword>
<keyword id="KW-0832">Ubl conjugation</keyword>
<keyword id="KW-1161">Viral attachment to host cell</keyword>
<keyword id="KW-0261">Viral envelope protein</keyword>
<keyword id="KW-0899">Viral immunoevasion</keyword>
<keyword id="KW-1182">Viral ion channel</keyword>
<keyword id="KW-1162">Viral penetration into host cytoplasm</keyword>
<keyword id="KW-0693">Viral RNA replication</keyword>
<keyword id="KW-0946">Virion</keyword>
<keyword id="KW-1164">Virus endocytosis by host</keyword>
<keyword id="KW-1160">Virus entry into host cell</keyword>
<keyword id="KW-0862">Zinc</keyword>
<evidence type="ECO:0000250" key="1">
    <source>
        <dbReference type="UniProtKB" id="P03314"/>
    </source>
</evidence>
<evidence type="ECO:0000250" key="2">
    <source>
        <dbReference type="UniProtKB" id="P14335"/>
    </source>
</evidence>
<evidence type="ECO:0000250" key="3">
    <source>
        <dbReference type="UniProtKB" id="P14336"/>
    </source>
</evidence>
<evidence type="ECO:0000250" key="4">
    <source>
        <dbReference type="UniProtKB" id="P14340"/>
    </source>
</evidence>
<evidence type="ECO:0000250" key="5">
    <source>
        <dbReference type="UniProtKB" id="P17763"/>
    </source>
</evidence>
<evidence type="ECO:0000250" key="6">
    <source>
        <dbReference type="UniProtKB" id="P29990"/>
    </source>
</evidence>
<evidence type="ECO:0000250" key="7">
    <source>
        <dbReference type="UniProtKB" id="P29991"/>
    </source>
</evidence>
<evidence type="ECO:0000250" key="8">
    <source>
        <dbReference type="UniProtKB" id="Q32ZE1"/>
    </source>
</evidence>
<evidence type="ECO:0000250" key="9">
    <source>
        <dbReference type="UniProtKB" id="Q9Q6P4"/>
    </source>
</evidence>
<evidence type="ECO:0000255" key="10"/>
<evidence type="ECO:0000255" key="11">
    <source>
        <dbReference type="PROSITE-ProRule" id="PRU00498"/>
    </source>
</evidence>
<evidence type="ECO:0000255" key="12">
    <source>
        <dbReference type="PROSITE-ProRule" id="PRU00539"/>
    </source>
</evidence>
<evidence type="ECO:0000255" key="13">
    <source>
        <dbReference type="PROSITE-ProRule" id="PRU00541"/>
    </source>
</evidence>
<evidence type="ECO:0000255" key="14">
    <source>
        <dbReference type="PROSITE-ProRule" id="PRU00542"/>
    </source>
</evidence>
<evidence type="ECO:0000255" key="15">
    <source>
        <dbReference type="PROSITE-ProRule" id="PRU00859"/>
    </source>
</evidence>
<evidence type="ECO:0000255" key="16">
    <source>
        <dbReference type="PROSITE-ProRule" id="PRU00860"/>
    </source>
</evidence>
<evidence type="ECO:0000255" key="17">
    <source>
        <dbReference type="PROSITE-ProRule" id="PRU00924"/>
    </source>
</evidence>
<evidence type="ECO:0000269" key="18">
    <source>
    </source>
</evidence>
<evidence type="ECO:0000269" key="19">
    <source>
    </source>
</evidence>
<evidence type="ECO:0000269" key="20">
    <source>
    </source>
</evidence>
<evidence type="ECO:0007829" key="21">
    <source>
        <dbReference type="PDB" id="4HHJ"/>
    </source>
</evidence>
<evidence type="ECO:0007829" key="22">
    <source>
        <dbReference type="PDB" id="5EIW"/>
    </source>
</evidence>
<evidence type="ECO:0007829" key="23">
    <source>
        <dbReference type="PDB" id="5F41"/>
    </source>
</evidence>
<evidence type="ECO:0007829" key="24">
    <source>
        <dbReference type="PDB" id="5HMY"/>
    </source>
</evidence>
<evidence type="ECO:0007829" key="25">
    <source>
        <dbReference type="PDB" id="5HMZ"/>
    </source>
</evidence>
<evidence type="ECO:0007829" key="26">
    <source>
        <dbReference type="PDB" id="5IQ6"/>
    </source>
</evidence>
<evidence type="ECO:0007829" key="27">
    <source>
        <dbReference type="PDB" id="5JJS"/>
    </source>
</evidence>
<evidence type="ECO:0007829" key="28">
    <source>
        <dbReference type="PDB" id="6XD1"/>
    </source>
</evidence>
<reference key="1">
    <citation type="journal article" date="2003" name="J. Clin. Microbiol.">
        <title>Genetic characterization of newly reintroduced dengue virus type 3 in Martinique (French West Indies).</title>
        <authorList>
            <person name="Peyrefitte C.N."/>
            <person name="Couissinier-Paris P."/>
            <person name="Mercier-Perennec V."/>
            <person name="Bessaud M."/>
            <person name="Martial J."/>
            <person name="Kenane N."/>
            <person name="Durand J.-P.A."/>
            <person name="Tolou H.J."/>
        </authorList>
    </citation>
    <scope>NUCLEOTIDE SEQUENCE [GENOMIC RNA]</scope>
</reference>
<reference key="2">
    <citation type="submission" date="2004-06" db="EMBL/GenBank/DDBJ databases">
        <title>Full length genomic sequence of a Dengue virus of serotype 3 from Singapore.</title>
        <authorList>
            <person name="Lim S.P."/>
            <person name="Ooi E.E."/>
            <person name="Vasudevan S.G."/>
        </authorList>
    </citation>
    <scope>NUCLEOTIDE SEQUENCE [LARGE SCALE GENOMIC RNA]</scope>
</reference>
<reference key="3">
    <citation type="journal article" date="2007" name="J. Virol.">
        <title>Crystal structure of the dengue virus RNA-dependent RNA polymerase catalytic domain at 1.85-angstrom resolution.</title>
        <authorList>
            <person name="Yap T.L."/>
            <person name="Xu T."/>
            <person name="Chen Y.L."/>
            <person name="Malet H."/>
            <person name="Egloff M.P."/>
            <person name="Canard B."/>
            <person name="Vasudevan S.G."/>
            <person name="Lescar J."/>
        </authorList>
    </citation>
    <scope>X-RAY CRYSTALLOGRAPHY (1.85 ANGSTROMS) OF 2762-3390 IN COMPLEX WITH GTP AND ZINC</scope>
</reference>
<reference key="4">
    <citation type="journal article" date="2013" name="J. Biol. Chem.">
        <title>A crystal structure of the dengue virus non-structural protein 5 (NS5) polymerase delineates interdomain amino acid residues that enhance its thermostability and de novo initiation activities.</title>
        <authorList>
            <person name="Lim S.P."/>
            <person name="Koh J.H."/>
            <person name="Seh C.C."/>
            <person name="Liew C.W."/>
            <person name="Davidson A.D."/>
            <person name="Chua L.S."/>
            <person name="Chandrasekaran R."/>
            <person name="Cornvik T.C."/>
            <person name="Shi P.Y."/>
            <person name="Lescar J."/>
        </authorList>
    </citation>
    <scope>X-RAY CRYSTALLOGRAPHY (2.60 ANGSTROMS) OF 2753-3390 IN COMPLEX WITH ZINC</scope>
    <scope>CATALYTIC ACTIVITY (RNA-DIRECTED RNA POLYMERASE NS5)</scope>
    <scope>SUBUNIT (RNA-DIRECTED RNA POLYMERASE NS5)</scope>
</reference>
<reference key="5">
    <citation type="journal article" date="2015" name="Proc. Natl. Acad. Sci. U.S.A.">
        <title>Molecular basis for specific viral RNA recognition and 2'-O-ribose methylation by the dengue virus nonstructural protein 5 (NS5).</title>
        <authorList>
            <person name="Zhao Y."/>
            <person name="Soh T.S."/>
            <person name="Lim S.P."/>
            <person name="Chung K.Y."/>
            <person name="Swaminathan K."/>
            <person name="Vasudevan S.G."/>
            <person name="Shi P.Y."/>
            <person name="Lescar J."/>
            <person name="Luo D."/>
        </authorList>
    </citation>
    <scope>X-RAY CRYSTALLOGRAPHY (2.60 ANGSTROMS) OF 2496-3385</scope>
    <scope>CATALYTIC ACTIVITY (RNA-DIRECTED RNA POLYMERASE NS5)</scope>
    <scope>MUTAGENESIS OF ARG-2528; LYS-2532; ARG-2547; LYS-2551; ARG-2574; GLU-2601; ASP-2636; LYS-2670; ARG-2701 AND GLU-2706</scope>
    <scope>ACTIVE SITE (RNA-DIRECTED RNA POLYMERASE NS5)</scope>
</reference>